<organism>
    <name type="scientific">Homo sapiens</name>
    <name type="common">Human</name>
    <dbReference type="NCBI Taxonomy" id="9606"/>
    <lineage>
        <taxon>Eukaryota</taxon>
        <taxon>Metazoa</taxon>
        <taxon>Chordata</taxon>
        <taxon>Craniata</taxon>
        <taxon>Vertebrata</taxon>
        <taxon>Euteleostomi</taxon>
        <taxon>Mammalia</taxon>
        <taxon>Eutheria</taxon>
        <taxon>Euarchontoglires</taxon>
        <taxon>Primates</taxon>
        <taxon>Haplorrhini</taxon>
        <taxon>Catarrhini</taxon>
        <taxon>Hominidae</taxon>
        <taxon>Homo</taxon>
    </lineage>
</organism>
<sequence>MASTSRLDALPRVTCPNHPDAILVEDYRAGDMICPECGLVVGDRVIDVGSEWRTFSNDKATKDPSRVGDSQNPLLSDGDLSTMIGKGTGAASFDEFGNSKYQNRRTMSSSDRAMMNAFKEITTMADRINLPRNIVDRTNNLFKQVYEQKSLKGRANDAIASACLYIACRQEGVPRTFKEICAVSRISKKEIGRCFKLILKALETSVDLITTGDFMSRFCSNLCLPKQVQMAATHIARKAVELDLVPGRSPISVAAAAIYMASQASAEKRTQKEIGDIAGVADVTIRQSYRLIYPRAPDLFPTDFKFDTPVDKLPQL</sequence>
<feature type="chain" id="PRO_0000119293" description="Transcription initiation factor IIB">
    <location>
        <begin position="1"/>
        <end position="316"/>
    </location>
</feature>
<feature type="repeat" description="1">
    <location>
        <begin position="124"/>
        <end position="200"/>
    </location>
</feature>
<feature type="repeat" description="2">
    <location>
        <begin position="218"/>
        <end position="294"/>
    </location>
</feature>
<feature type="zinc finger region" description="TFIIB-type" evidence="2">
    <location>
        <begin position="11"/>
        <end position="42"/>
    </location>
</feature>
<feature type="region of interest" description="Core promoter DNA-binding" evidence="5">
    <location>
        <begin position="189"/>
        <end position="193"/>
    </location>
</feature>
<feature type="region of interest" description="Necessary for TATA box-bound TBP complex formation" evidence="29 30">
    <location>
        <begin position="244"/>
        <end position="316"/>
    </location>
</feature>
<feature type="region of interest" description="Core promoter DNA-binding" evidence="23">
    <location>
        <begin position="249"/>
        <end position="252"/>
    </location>
</feature>
<feature type="region of interest" description="Core promoter DNA-binding" evidence="5 23">
    <location>
        <begin position="283"/>
        <end position="286"/>
    </location>
</feature>
<feature type="binding site" evidence="2 7 9 18 41 42 47">
    <location>
        <position position="15"/>
    </location>
    <ligand>
        <name>Zn(2+)</name>
        <dbReference type="ChEBI" id="CHEBI:29105"/>
    </ligand>
</feature>
<feature type="binding site" evidence="2 7 9 41 42">
    <location>
        <position position="18"/>
    </location>
    <ligand>
        <name>Zn(2+)</name>
        <dbReference type="ChEBI" id="CHEBI:29105"/>
    </ligand>
</feature>
<feature type="binding site" evidence="2 7 9 18 41 42 47">
    <location>
        <position position="34"/>
    </location>
    <ligand>
        <name>Zn(2+)</name>
        <dbReference type="ChEBI" id="CHEBI:29105"/>
    </ligand>
</feature>
<feature type="binding site" evidence="2 7 9 18 41 42 47">
    <location>
        <position position="37"/>
    </location>
    <ligand>
        <name>Zn(2+)</name>
        <dbReference type="ChEBI" id="CHEBI:29105"/>
    </ligand>
</feature>
<feature type="binding site" evidence="18 54">
    <location>
        <position position="53"/>
    </location>
    <ligand>
        <name>DNA</name>
        <dbReference type="ChEBI" id="CHEBI:16991"/>
    </ligand>
</feature>
<feature type="binding site" evidence="18 54">
    <location>
        <position position="61"/>
    </location>
    <ligand>
        <name>DNA</name>
        <dbReference type="ChEBI" id="CHEBI:16991"/>
    </ligand>
</feature>
<feature type="binding site" evidence="18 54">
    <location>
        <position position="152"/>
    </location>
    <ligand>
        <name>DNA</name>
        <dbReference type="ChEBI" id="CHEBI:16991"/>
    </ligand>
</feature>
<feature type="binding site" evidence="18 54">
    <location>
        <position position="154"/>
    </location>
    <ligand>
        <name>DNA</name>
        <dbReference type="ChEBI" id="CHEBI:16991"/>
    </ligand>
</feature>
<feature type="binding site" evidence="18 54">
    <location>
        <position position="189"/>
    </location>
    <ligand>
        <name>DNA</name>
        <dbReference type="ChEBI" id="CHEBI:16991"/>
    </ligand>
</feature>
<feature type="binding site" evidence="18 54">
    <location>
        <position position="196"/>
    </location>
    <ligand>
        <name>DNA</name>
        <dbReference type="ChEBI" id="CHEBI:16991"/>
    </ligand>
</feature>
<feature type="binding site" evidence="18 54">
    <location>
        <position position="248"/>
    </location>
    <ligand>
        <name>DNA</name>
        <dbReference type="ChEBI" id="CHEBI:16991"/>
    </ligand>
</feature>
<feature type="binding site" evidence="18 54">
    <location>
        <position position="272"/>
    </location>
    <ligand>
        <name>DNA</name>
        <dbReference type="ChEBI" id="CHEBI:16991"/>
    </ligand>
</feature>
<feature type="binding site" evidence="18 54">
    <location>
        <position position="281"/>
    </location>
    <ligand>
        <name>DNA</name>
        <dbReference type="ChEBI" id="CHEBI:16991"/>
    </ligand>
</feature>
<feature type="binding site" evidence="18 54">
    <location>
        <position position="284"/>
    </location>
    <ligand>
        <name>DNA</name>
        <dbReference type="ChEBI" id="CHEBI:16991"/>
    </ligand>
</feature>
<feature type="binding site" evidence="18 54">
    <location>
        <position position="286"/>
    </location>
    <ligand>
        <name>DNA</name>
        <dbReference type="ChEBI" id="CHEBI:16991"/>
    </ligand>
</feature>
<feature type="binding site" evidence="18 54">
    <location>
        <position position="290"/>
    </location>
    <ligand>
        <name>DNA</name>
        <dbReference type="ChEBI" id="CHEBI:16991"/>
    </ligand>
</feature>
<feature type="modified residue" description="Phosphoserine" evidence="58">
    <location>
        <position position="70"/>
    </location>
</feature>
<feature type="modified residue" description="Phosphoserine" evidence="56 57 58">
    <location>
        <position position="76"/>
    </location>
</feature>
<feature type="modified residue" description="Phosphoserine" evidence="58">
    <location>
        <position position="92"/>
    </location>
</feature>
<feature type="modified residue" description="N6-acetyllysine; by autocatalysis" evidence="8">
    <location>
        <position position="238"/>
    </location>
</feature>
<feature type="sequence variant" id="VAR_011977" description="In dbSNP:rs1804499.">
    <original>P</original>
    <variation>S</variation>
    <location>
        <position position="19"/>
    </location>
</feature>
<feature type="sequence variant" id="VAR_035722" description="In a colorectal cancer sample; somatic mutation; dbSNP:rs144944840." evidence="13">
    <original>R</original>
    <variation>Q</variation>
    <location>
        <position position="132"/>
    </location>
</feature>
<feature type="mutagenesis site" description="Does not inhibit interaction with TBP. Inhibits the recruitment of RNA polymerase II into the initiation complex." evidence="31">
    <original>C</original>
    <variation>S</variation>
    <location>
        <position position="37"/>
    </location>
</feature>
<feature type="mutagenesis site" description="Partial loss of HIV-1 Vpr binding." evidence="4">
    <original>EWRTFS</original>
    <variation>AWRTFA</variation>
    <location>
        <begin position="51"/>
        <end position="56"/>
    </location>
</feature>
<feature type="mutagenesis site" description="Defects in transcription start site selection. Supports a level of transcription equivalent to wild-type." evidence="3">
    <original>E</original>
    <variation>R</variation>
    <variation>A</variation>
    <variation>D</variation>
    <location>
        <position position="51"/>
    </location>
</feature>
<feature type="mutagenesis site" description="Partial loss of HIV-1 Vpr binding." evidence="4">
    <original>W</original>
    <variation>A</variation>
    <location>
        <position position="52"/>
    </location>
</feature>
<feature type="mutagenesis site" description="Partial loss of HIV-1 Vpr binding." evidence="4">
    <original>RT</original>
    <variation>AA</variation>
    <location>
        <begin position="53"/>
        <end position="54"/>
    </location>
</feature>
<feature type="mutagenesis site" description="Partial loss of HIV-1 Vpr binding." evidence="4">
    <original>F</original>
    <variation>A</variation>
    <location>
        <position position="55"/>
    </location>
</feature>
<feature type="mutagenesis site" description="Defects in transcription start site selection. Supports a level of transcription equivalent to wild-type." evidence="3">
    <original>R</original>
    <variation>A</variation>
    <variation>E</variation>
    <variation>K</variation>
    <location>
        <position position="66"/>
    </location>
</feature>
<feature type="mutagenesis site" description="Decreases BREd-dependent pre-initiation complex formation." evidence="12">
    <original>G</original>
    <variation>Q</variation>
    <location>
        <position position="153"/>
    </location>
</feature>
<feature type="mutagenesis site" description="Reduces interaction with SSU72; when associated with E-193 or E-200. Inhibits interaction with VP16; when associated with E-193. Inhibits RNA pol II transcription activation induced by VP16 but does not affect basal transcription; when associated with E-193." evidence="19 28">
    <original>R</original>
    <variation>E</variation>
    <location>
        <position position="185"/>
    </location>
</feature>
<feature type="mutagenesis site" description="Reduces interaction with VP16; when associated with L-189." evidence="28">
    <original>R</original>
    <variation>L</variation>
    <location>
        <position position="185"/>
    </location>
</feature>
<feature type="mutagenesis site" description="Inhibits interaction with SSU72; when associated with E-193. Reduces interaction with SSU72; when associated with E-200. Inhibits interaction with VP16; when associated with E-200. Inhibits RNA pol II transcription activation induced by VP16 but does not affect basal transcription; when associated with E-200." evidence="19 28">
    <original>K</original>
    <variation>E</variation>
    <location>
        <position position="189"/>
    </location>
</feature>
<feature type="mutagenesis site" description="Reduces interaction with VP16; when associated with L-185." evidence="28">
    <original>K</original>
    <variation>L</variation>
    <location>
        <position position="189"/>
    </location>
</feature>
<feature type="mutagenesis site" description="Inhibits interaction with SSU72; when associated with E-185 or E-189. Inhibits interaction with VP16; when associated with E-185. Inhibits RNA pol II transcription activation induced by VP16 but does not affect basal transcription; when associated with E-185." evidence="19 28">
    <original>R</original>
    <variation>E</variation>
    <location>
        <position position="193"/>
    </location>
</feature>
<feature type="mutagenesis site" description="Reduces interaction with VP16; when associated with L-200." evidence="28">
    <original>K</original>
    <variation>L</variation>
    <location>
        <position position="196"/>
    </location>
</feature>
<feature type="mutagenesis site" description="Reduces the formation of the TATA box-bound TBP ternary complex." evidence="19">
    <original>KALETSVDL</original>
    <variation>GSGS</variation>
    <location>
        <begin position="200"/>
        <end position="208"/>
    </location>
</feature>
<feature type="mutagenesis site" description="Reduces interaction with SSU72; when associated with E-185 or E-189. Inhibits interaction with VP16; when associated with E-189. Inhibits RNA pol II transcription activation induced by VP16 but does not affect basal transcription; when associated with E-189." evidence="19 28">
    <original>K</original>
    <variation>E</variation>
    <location>
        <position position="200"/>
    </location>
</feature>
<feature type="mutagenesis site" description="Reduces the formation of the TATA box-bound TBP ternary complex." evidence="19">
    <original>K</original>
    <variation>KGSGS</variation>
    <location>
        <position position="200"/>
    </location>
</feature>
<feature type="mutagenesis site" description="Reduces interaction with VP16; when associated with L-196." evidence="28">
    <original>K</original>
    <variation>L</variation>
    <location>
        <position position="200"/>
    </location>
</feature>
<feature type="mutagenesis site" description="Does not inhibit the formation of the TATA box-bound TBP ternary complex." evidence="19">
    <original>L</original>
    <variation>LGSGS</variation>
    <location>
        <position position="208"/>
    </location>
</feature>
<feature type="mutagenesis site" description="Abolishes autoacetylation, represses transcription activity, does not inhibit its association with chromatin to promoter-specific regions and decreases the association of GTF2F1 with chromatin to promoter-specific regions." evidence="8">
    <original>K</original>
    <variation>A</variation>
    <location>
        <position position="238"/>
    </location>
</feature>
<feature type="mutagenesis site" description="Inhibits interaction with TBP." evidence="31">
    <original>G</original>
    <variation>V</variation>
    <location>
        <position position="247"/>
    </location>
</feature>
<feature type="mutagenesis site" description="Reduces DNA-binding." evidence="35">
    <original>V</original>
    <variation>A</variation>
    <location>
        <position position="283"/>
    </location>
</feature>
<feature type="mutagenesis site" description="Reduces DNA-binding." evidence="35">
    <original>R</original>
    <variation>A</variation>
    <location>
        <position position="286"/>
    </location>
</feature>
<feature type="mutagenesis site" description="Inhibits interaction with RNA polymerase II; when associated with E-290 and E-295." evidence="27">
    <original>R</original>
    <variation>E</variation>
    <location>
        <position position="286"/>
    </location>
</feature>
<feature type="mutagenesis site" description="Inhibits interaction with RNA polymerase II; when associated with E-286 and E-295." evidence="27">
    <original>R</original>
    <variation>E</variation>
    <location>
        <position position="290"/>
    </location>
</feature>
<feature type="mutagenesis site" description="Inhibits interaction with RNA polymerase II; when associated with E-286 and E-290." evidence="27">
    <original>R</original>
    <variation>E</variation>
    <location>
        <position position="295"/>
    </location>
</feature>
<feature type="strand" evidence="60">
    <location>
        <begin position="4"/>
        <end position="6"/>
    </location>
</feature>
<feature type="strand" evidence="62">
    <location>
        <begin position="18"/>
        <end position="20"/>
    </location>
</feature>
<feature type="strand" evidence="62">
    <location>
        <begin position="24"/>
        <end position="26"/>
    </location>
</feature>
<feature type="turn" evidence="62">
    <location>
        <begin position="27"/>
        <end position="30"/>
    </location>
</feature>
<feature type="strand" evidence="62">
    <location>
        <begin position="31"/>
        <end position="33"/>
    </location>
</feature>
<feature type="turn" evidence="62">
    <location>
        <begin position="35"/>
        <end position="37"/>
    </location>
</feature>
<feature type="strand" evidence="62">
    <location>
        <begin position="39"/>
        <end position="43"/>
    </location>
</feature>
<feature type="helix" evidence="61">
    <location>
        <begin position="48"/>
        <end position="51"/>
    </location>
</feature>
<feature type="helix" evidence="62">
    <location>
        <begin position="90"/>
        <end position="92"/>
    </location>
</feature>
<feature type="strand" evidence="62">
    <location>
        <begin position="97"/>
        <end position="101"/>
    </location>
</feature>
<feature type="helix" evidence="62">
    <location>
        <begin position="109"/>
        <end position="127"/>
    </location>
</feature>
<feature type="helix" evidence="62">
    <location>
        <begin position="132"/>
        <end position="148"/>
    </location>
</feature>
<feature type="turn" evidence="62">
    <location>
        <begin position="150"/>
        <end position="153"/>
    </location>
</feature>
<feature type="helix" evidence="62">
    <location>
        <begin position="156"/>
        <end position="170"/>
    </location>
</feature>
<feature type="helix" evidence="62">
    <location>
        <begin position="177"/>
        <end position="182"/>
    </location>
</feature>
<feature type="strand" evidence="62">
    <location>
        <begin position="184"/>
        <end position="186"/>
    </location>
</feature>
<feature type="helix" evidence="62">
    <location>
        <begin position="188"/>
        <end position="202"/>
    </location>
</feature>
<feature type="helix" evidence="62">
    <location>
        <begin position="211"/>
        <end position="213"/>
    </location>
</feature>
<feature type="helix" evidence="62">
    <location>
        <begin position="215"/>
        <end position="222"/>
    </location>
</feature>
<feature type="helix" evidence="62">
    <location>
        <begin position="226"/>
        <end position="242"/>
    </location>
</feature>
<feature type="strand" evidence="63">
    <location>
        <begin position="245"/>
        <end position="247"/>
    </location>
</feature>
<feature type="helix" evidence="62">
    <location>
        <begin position="250"/>
        <end position="263"/>
    </location>
</feature>
<feature type="strand" evidence="62">
    <location>
        <begin position="265"/>
        <end position="267"/>
    </location>
</feature>
<feature type="helix" evidence="62">
    <location>
        <begin position="271"/>
        <end position="278"/>
    </location>
</feature>
<feature type="helix" evidence="62">
    <location>
        <begin position="282"/>
        <end position="292"/>
    </location>
</feature>
<feature type="helix" evidence="59">
    <location>
        <begin position="293"/>
        <end position="295"/>
    </location>
</feature>
<feature type="helix" evidence="62">
    <location>
        <begin position="296"/>
        <end position="299"/>
    </location>
</feature>
<feature type="helix" evidence="62">
    <location>
        <begin position="310"/>
        <end position="312"/>
    </location>
</feature>
<protein>
    <recommendedName>
        <fullName evidence="37">Transcription initiation factor IIB</fullName>
        <ecNumber evidence="8">2.3.1.48</ecNumber>
    </recommendedName>
    <alternativeName>
        <fullName evidence="38">General transcription factor TFIIB</fullName>
    </alternativeName>
    <alternativeName>
        <fullName evidence="36">S300-II</fullName>
    </alternativeName>
</protein>
<comment type="function">
    <text evidence="3 5 8 10 12 14 15 17 18 20 21 22 23 26 27 29 30 31 35">General transcription factor that plays a role in transcription initiation by RNA polymerase II (Pol II). Involved in the pre-initiation complex (PIC) formation and Pol II recruitment at promoter DNA (PubMed:12931194, PubMed:1517211, PubMed:1876184, PubMed:1946368, PubMed:27193682, PubMed:3029109, PubMed:3818643, PubMed:7601352, PubMed:8413225, PubMed:8515820, PubMed:8516311, PubMed:8516312, PubMed:9420329). Together with the TATA box-bound TBP forms the core initiation complex and provides a bridge between TBP and the Pol II-TFIIF complex (PubMed:8413225, PubMed:8504927, PubMed:8515820, PubMed:8516311, PubMed:8516312). Released from the PIC early following the onset of transcription during the initiation and elongation transition and reassociates with TBP during the next transcription cycle (PubMed:7601352). Associates with chromatin to core promoter-specific regions (PubMed:12931194, PubMed:24441171). Binds to two distinct DNA core promoter consensus sequence elements in a TBP-independent manner; these IIB-recognition elements (BREs) are localized immediately upstream (BREu), 5'-[GC][GC][GA]CGCC-3', and downstream (BREd), 5'-[GA]T[TGA][TG][GT][TG][TG]-3', of the TATA box element (PubMed:10619841, PubMed:16230532, PubMed:7675079, PubMed:9420329). Modulates transcription start site selection (PubMed:10318856). Also exhibits autoacetyltransferase activity that contributes to the activated transcription (PubMed:12931194).</text>
</comment>
<comment type="catalytic activity">
    <reaction evidence="8">
        <text>L-lysyl-[protein] + acetyl-CoA = N(6)-acetyl-L-lysyl-[protein] + CoA + H(+)</text>
        <dbReference type="Rhea" id="RHEA:45948"/>
        <dbReference type="Rhea" id="RHEA-COMP:9752"/>
        <dbReference type="Rhea" id="RHEA-COMP:10731"/>
        <dbReference type="ChEBI" id="CHEBI:15378"/>
        <dbReference type="ChEBI" id="CHEBI:29969"/>
        <dbReference type="ChEBI" id="CHEBI:57287"/>
        <dbReference type="ChEBI" id="CHEBI:57288"/>
        <dbReference type="ChEBI" id="CHEBI:61930"/>
        <dbReference type="EC" id="2.3.1.48"/>
    </reaction>
</comment>
<comment type="biophysicochemical properties">
    <kinetics>
        <KM evidence="8">0.117 mM for acetyl-CoA</KM>
    </kinetics>
</comment>
<comment type="subunit">
    <text evidence="1 5 6 8 10 14 16 18 19 20 21 22 26 27 29 30 31 32 33">Found in a ternary complex with TATA box-bound TBP (PubMed:10619841, PubMed:29158257, PubMed:8413225, PubMed:8515820, PubMed:8516311, PubMed:8516312). Part of a TFIID-containing RNA polymerase II pre-initiation complex (PIC) that is composed of TBP and at least GTF2A1, GTF2A2, GTF2E1, GTF2E2, GTF2F1, GTF2H2, GTF2H3, GTF2H4, GTF2H5, GTF2B, TCEA1, ERCC2, ERCC3, TAF1, TAF2, TAF3, TAF4, TAF5, TAF6, TAF7, TAF8, TAF9, TAF10, TAF11, TAF12 and TAF13 (PubMed:27193682). Associates with TFIID-TFIIA (DA complex) to form TFIID-TFIIA-TFIIB (DAB complex), which is then recognized by RNA polymerase II (Pol II) (PubMed:1876184, PubMed:2247058). Found in a RNA polymerase II initiation complex (PubMed:3029109, PubMed:3818643, PubMed:7601352, PubMed:8413225, PubMed:8516312). Interacts (via C-terminus) with TBP; this interaction with TATA box-bound TBP guides Pol II into the PIC (PubMed:10619841, PubMed:8504927). Interacts (via N-terminus) with Pol II (PubMed:8413225, PubMed:8504927). Interacts (via C-terminus) with SSU72; this interaction is inhibited by SYMPK (PubMed:29158257). Interacts with NR2F1; this interaction is direct (PubMed:1517211). Interacts with PGR (PubMed:1517211). Interacts with ESR1 (PubMed:1517211). Interacts with GTF2F1 (via C-terminus and preferentially via acetylated form); this interaction prevents binding of GTF2B to GTF2F2 (PubMed:12931194, PubMed:8662660). Interacts with GTF2F2 (via N-terminus); this interaction is inhibited in presence of GTF2F1 (PubMed:8504927, PubMed:8662660). Interacts with the transcription elongation factor TCEA2 (PubMed:8566795). Interacts with HSF1 (via transactivation domain) (PubMed:11005381). Interacts with GPBP1 (By similarity).</text>
</comment>
<comment type="subunit">
    <text evidence="34">(Microbial infection) Interacts with HIV-1 Vpr.</text>
</comment>
<comment type="subunit">
    <text evidence="24">(Microbial infection) Interacts with Epstein-Barr virus EBNA2.</text>
</comment>
<comment type="subunit">
    <text evidence="25">(Microbial infection) Interacts with Herpes simplex virus 1 protein ICP4.</text>
</comment>
<comment type="subunit">
    <text evidence="11 28">(Microbial infection) Interacts (via C-terminus) with the Herpes simplex virus activator VP16; this interaction stimulates RNA Pol II transcription by increasing the extent of pre-initiation complex assembly.</text>
</comment>
<comment type="interaction">
    <interactant intactId="EBI-389564">
        <id>Q00403</id>
    </interactant>
    <interactant intactId="EBI-2556915">
        <id>P13928</id>
        <label>ANXA8</label>
    </interactant>
    <organismsDiffer>false</organismsDiffer>
    <experiments>3</experiments>
</comment>
<comment type="interaction">
    <interactant intactId="EBI-389564">
        <id>Q00403</id>
    </interactant>
    <interactant intactId="EBI-77613">
        <id>P05067</id>
        <label>APP</label>
    </interactant>
    <organismsDiffer>false</organismsDiffer>
    <experiments>3</experiments>
</comment>
<comment type="interaction">
    <interactant intactId="EBI-389564">
        <id>Q00403</id>
    </interactant>
    <interactant intactId="EBI-10254793">
        <id>Q6XD76</id>
        <label>ASCL4</label>
    </interactant>
    <organismsDiffer>false</organismsDiffer>
    <experiments>3</experiments>
</comment>
<comment type="interaction">
    <interactant intactId="EBI-389564">
        <id>Q00403</id>
    </interactant>
    <interactant intactId="EBI-742750">
        <id>Q8TBE0</id>
        <label>BAHD1</label>
    </interactant>
    <organismsDiffer>false</organismsDiffer>
    <experiments>3</experiments>
</comment>
<comment type="interaction">
    <interactant intactId="EBI-389564">
        <id>Q00403</id>
    </interactant>
    <interactant intactId="EBI-11524174">
        <id>Q9H972-2</id>
        <label>C14orf93</label>
    </interactant>
    <organismsDiffer>false</organismsDiffer>
    <experiments>3</experiments>
</comment>
<comment type="interaction">
    <interactant intactId="EBI-389564">
        <id>Q00403</id>
    </interactant>
    <interactant intactId="EBI-744027">
        <id>Q13191</id>
        <label>CBLB</label>
    </interactant>
    <organismsDiffer>false</organismsDiffer>
    <experiments>3</experiments>
</comment>
<comment type="interaction">
    <interactant intactId="EBI-389564">
        <id>Q00403</id>
    </interactant>
    <interactant intactId="EBI-11974585">
        <id>Q14781-2</id>
        <label>CBX2</label>
    </interactant>
    <organismsDiffer>false</organismsDiffer>
    <experiments>3</experiments>
</comment>
<comment type="interaction">
    <interactant intactId="EBI-389564">
        <id>Q00403</id>
    </interactant>
    <interactant intactId="EBI-9087876">
        <id>P48730-2</id>
        <label>CSNK1D</label>
    </interactant>
    <organismsDiffer>false</organismsDiffer>
    <experiments>3</experiments>
</comment>
<comment type="interaction">
    <interactant intactId="EBI-389564">
        <id>Q00403</id>
    </interactant>
    <interactant intactId="EBI-25842815">
        <id>Q5TAQ9-2</id>
        <label>DCAF8</label>
    </interactant>
    <organismsDiffer>false</organismsDiffer>
    <experiments>3</experiments>
</comment>
<comment type="interaction">
    <interactant intactId="EBI-389564">
        <id>Q00403</id>
    </interactant>
    <interactant intactId="EBI-712941">
        <id>Q14919</id>
        <label>DRAP1</label>
    </interactant>
    <organismsDiffer>false</organismsDiffer>
    <experiments>6</experiments>
</comment>
<comment type="interaction">
    <interactant intactId="EBI-389564">
        <id>Q00403</id>
    </interactant>
    <interactant intactId="EBI-447295">
        <id>Q09472</id>
        <label>EP300</label>
    </interactant>
    <organismsDiffer>false</organismsDiffer>
    <experiments>2</experiments>
</comment>
<comment type="interaction">
    <interactant intactId="EBI-389564">
        <id>Q00403</id>
    </interactant>
    <interactant intactId="EBI-5461838">
        <id>Q17RN3</id>
        <label>FAM98C</label>
    </interactant>
    <organismsDiffer>false</organismsDiffer>
    <experiments>3</experiments>
</comment>
<comment type="interaction">
    <interactant intactId="EBI-389564">
        <id>Q00403</id>
    </interactant>
    <interactant intactId="EBI-8468186">
        <id>Q8IZU1</id>
        <label>FAM9A</label>
    </interactant>
    <organismsDiffer>false</organismsDiffer>
    <experiments>3</experiments>
</comment>
<comment type="interaction">
    <interactant intactId="EBI-389564">
        <id>Q00403</id>
    </interactant>
    <interactant intactId="EBI-5916454">
        <id>A6NEM1</id>
        <label>GOLGA6L9</label>
    </interactant>
    <organismsDiffer>false</organismsDiffer>
    <experiments>3</experiments>
</comment>
<comment type="interaction">
    <interactant intactId="EBI-389564">
        <id>Q00403</id>
    </interactant>
    <interactant intactId="EBI-2680288">
        <id>Q9HCC6</id>
        <label>HES4</label>
    </interactant>
    <organismsDiffer>false</organismsDiffer>
    <experiments>3</experiments>
</comment>
<comment type="interaction">
    <interactant intactId="EBI-389564">
        <id>Q00403</id>
    </interactant>
    <interactant intactId="EBI-713456">
        <id>Q13123</id>
        <label>IK</label>
    </interactant>
    <organismsDiffer>false</organismsDiffer>
    <experiments>3</experiments>
</comment>
<comment type="interaction">
    <interactant intactId="EBI-389564">
        <id>Q00403</id>
    </interactant>
    <interactant intactId="EBI-10278909">
        <id>Q92613</id>
        <label>JADE3</label>
    </interactant>
    <organismsDiffer>false</organismsDiffer>
    <experiments>3</experiments>
</comment>
<comment type="interaction">
    <interactant intactId="EBI-389564">
        <id>Q00403</id>
    </interactant>
    <interactant intactId="EBI-2796400">
        <id>Q9UIH9</id>
        <label>KLF15</label>
    </interactant>
    <organismsDiffer>false</organismsDiffer>
    <experiments>3</experiments>
</comment>
<comment type="interaction">
    <interactant intactId="EBI-389564">
        <id>Q00403</id>
    </interactant>
    <interactant intactId="EBI-5278370">
        <id>Q14693</id>
        <label>LPIN1</label>
    </interactant>
    <organismsDiffer>false</organismsDiffer>
    <experiments>3</experiments>
</comment>
<comment type="interaction">
    <interactant intactId="EBI-389564">
        <id>Q00403</id>
    </interactant>
    <interactant intactId="EBI-8475277">
        <id>Q15049</id>
        <label>MLC1</label>
    </interactant>
    <organismsDiffer>false</organismsDiffer>
    <experiments>3</experiments>
</comment>
<comment type="interaction">
    <interactant intactId="EBI-389564">
        <id>Q00403</id>
    </interactant>
    <interactant intactId="EBI-447544">
        <id>P01106</id>
        <label>MYC</label>
    </interactant>
    <organismsDiffer>false</organismsDiffer>
    <experiments>3</experiments>
</comment>
<comment type="interaction">
    <interactant intactId="EBI-389564">
        <id>Q00403</id>
    </interactant>
    <interactant intactId="EBI-18577082">
        <id>O15381-5</id>
        <label>NVL</label>
    </interactant>
    <organismsDiffer>false</organismsDiffer>
    <experiments>3</experiments>
</comment>
<comment type="interaction">
    <interactant intactId="EBI-389564">
        <id>Q00403</id>
    </interactant>
    <interactant intactId="EBI-10302990">
        <id>Q9BYU1</id>
        <label>PBX4</label>
    </interactant>
    <organismsDiffer>false</organismsDiffer>
    <experiments>3</experiments>
</comment>
<comment type="interaction">
    <interactant intactId="EBI-389564">
        <id>Q00403</id>
    </interactant>
    <interactant intactId="EBI-2339674">
        <id>Q5T6S3</id>
        <label>PHF19</label>
    </interactant>
    <organismsDiffer>false</organismsDiffer>
    <experiments>3</experiments>
</comment>
<comment type="interaction">
    <interactant intactId="EBI-389564">
        <id>Q00403</id>
    </interactant>
    <interactant intactId="EBI-395189">
        <id>P19388</id>
        <label>POLR2E</label>
    </interactant>
    <organismsDiffer>false</organismsDiffer>
    <experiments>6</experiments>
</comment>
<comment type="interaction">
    <interactant intactId="EBI-389564">
        <id>Q00403</id>
    </interactant>
    <interactant intactId="EBI-743938">
        <id>Q96D59</id>
        <label>RNF183</label>
    </interactant>
    <organismsDiffer>false</organismsDiffer>
    <experiments>3</experiments>
</comment>
<comment type="interaction">
    <interactant intactId="EBI-389564">
        <id>Q00403</id>
    </interactant>
    <interactant intactId="EBI-366570">
        <id>Q9BUL9</id>
        <label>RPP25</label>
    </interactant>
    <organismsDiffer>false</organismsDiffer>
    <experiments>3</experiments>
</comment>
<comment type="interaction">
    <interactant intactId="EBI-389564">
        <id>Q00403</id>
    </interactant>
    <interactant intactId="EBI-354303">
        <id>P62701</id>
        <label>RPS4X</label>
    </interactant>
    <organismsDiffer>false</organismsDiffer>
    <experiments>3</experiments>
</comment>
<comment type="interaction">
    <interactant intactId="EBI-389564">
        <id>Q00403</id>
    </interactant>
    <interactant intactId="EBI-6257312">
        <id>Q9BVN2</id>
        <label>RUSC1</label>
    </interactant>
    <organismsDiffer>false</organismsDiffer>
    <experiments>3</experiments>
</comment>
<comment type="interaction">
    <interactant intactId="EBI-389564">
        <id>Q00403</id>
    </interactant>
    <interactant intactId="EBI-752324">
        <id>Q8N488</id>
        <label>RYBP</label>
    </interactant>
    <organismsDiffer>false</organismsDiffer>
    <experiments>3</experiments>
</comment>
<comment type="interaction">
    <interactant intactId="EBI-389564">
        <id>Q00403</id>
    </interactant>
    <interactant intactId="EBI-632609">
        <id>O75446</id>
        <label>SAP30</label>
    </interactant>
    <organismsDiffer>false</organismsDiffer>
    <experiments>3</experiments>
</comment>
<comment type="interaction">
    <interactant intactId="EBI-389564">
        <id>Q00403</id>
    </interactant>
    <interactant intactId="EBI-79819">
        <id>P60896</id>
        <label>SEM1</label>
    </interactant>
    <organismsDiffer>false</organismsDiffer>
    <experiments>3</experiments>
</comment>
<comment type="interaction">
    <interactant intactId="EBI-389564">
        <id>Q00403</id>
    </interactant>
    <interactant intactId="EBI-7067260">
        <id>Q8NHS9</id>
        <label>SPATA22</label>
    </interactant>
    <organismsDiffer>false</organismsDiffer>
    <experiments>3</experiments>
</comment>
<comment type="interaction">
    <interactant intactId="EBI-389564">
        <id>Q00403</id>
    </interactant>
    <interactant intactId="EBI-8345366">
        <id>Q8TCT7-2</id>
        <label>SPPL2B</label>
    </interactant>
    <organismsDiffer>false</organismsDiffer>
    <experiments>3</experiments>
</comment>
<comment type="interaction">
    <interactant intactId="EBI-389564">
        <id>Q00403</id>
    </interactant>
    <interactant intactId="EBI-11123832">
        <id>O60506-4</id>
        <label>SYNCRIP</label>
    </interactant>
    <organismsDiffer>false</organismsDiffer>
    <experiments>3</experiments>
</comment>
<comment type="interaction">
    <interactant intactId="EBI-389564">
        <id>Q00403</id>
    </interactant>
    <interactant intactId="EBI-355371">
        <id>P20226</id>
        <label>TBP</label>
    </interactant>
    <organismsDiffer>false</organismsDiffer>
    <experiments>2</experiments>
</comment>
<comment type="interaction">
    <interactant intactId="EBI-389564">
        <id>Q00403</id>
    </interactant>
    <interactant intactId="EBI-861737">
        <id>O43615</id>
        <label>TIMM44</label>
    </interactant>
    <organismsDiffer>false</organismsDiffer>
    <experiments>3</experiments>
</comment>
<comment type="interaction">
    <interactant intactId="EBI-389564">
        <id>Q00403</id>
    </interactant>
    <interactant intactId="EBI-357849">
        <id>Q15025</id>
        <label>TNIP1</label>
    </interactant>
    <organismsDiffer>false</organismsDiffer>
    <experiments>7</experiments>
</comment>
<comment type="interaction">
    <interactant intactId="EBI-389564">
        <id>Q00403</id>
    </interactant>
    <interactant intactId="EBI-1237316">
        <id>Q7Z2T5</id>
        <label>TRMT1L</label>
    </interactant>
    <organismsDiffer>false</organismsDiffer>
    <experiments>3</experiments>
</comment>
<comment type="interaction">
    <interactant intactId="EBI-389564">
        <id>Q00403</id>
    </interactant>
    <interactant intactId="EBI-10696113">
        <id>O75604-3</id>
        <label>USP2</label>
    </interactant>
    <organismsDiffer>false</organismsDiffer>
    <experiments>3</experiments>
</comment>
<comment type="interaction">
    <interactant intactId="EBI-389564">
        <id>Q00403</id>
    </interactant>
    <interactant intactId="EBI-6427899">
        <id>P58304</id>
        <label>VSX2</label>
    </interactant>
    <organismsDiffer>false</organismsDiffer>
    <experiments>3</experiments>
</comment>
<comment type="interaction">
    <interactant intactId="EBI-389564">
        <id>Q00403</id>
    </interactant>
    <interactant intactId="EBI-25831733">
        <id>Q96MN9-2</id>
        <label>ZNF488</label>
    </interactant>
    <organismsDiffer>false</organismsDiffer>
    <experiments>3</experiments>
</comment>
<comment type="interaction">
    <interactant intactId="EBI-389564">
        <id>Q00403</id>
    </interactant>
    <interactant intactId="EBI-18036029">
        <id>Q3KNS6-3</id>
        <label>ZNF829</label>
    </interactant>
    <organismsDiffer>false</organismsDiffer>
    <experiments>3</experiments>
</comment>
<comment type="interaction">
    <interactant intactId="EBI-389564">
        <id>Q00403</id>
    </interactant>
    <interactant intactId="EBI-12021938">
        <id>Q8NBB4-2</id>
        <label>ZSCAN1</label>
    </interactant>
    <organismsDiffer>false</organismsDiffer>
    <experiments>3</experiments>
</comment>
<comment type="interaction">
    <interactant intactId="EBI-389564">
        <id>Q00403</id>
    </interactant>
    <interactant intactId="EBI-10178224">
        <id>P10073</id>
        <label>ZSCAN22</label>
    </interactant>
    <organismsDiffer>false</organismsDiffer>
    <experiments>3</experiments>
</comment>
<comment type="interaction">
    <interactant intactId="EBI-389564">
        <id>Q00403</id>
    </interactant>
    <interactant intactId="EBI-637479">
        <id>P46077</id>
        <label>GRF4</label>
    </interactant>
    <organismsDiffer>true</organismsDiffer>
    <experiments>2</experiments>
</comment>
<comment type="interaction">
    <interactant intactId="EBI-389564">
        <id>Q00403</id>
    </interactant>
    <interactant intactId="EBI-11712595">
        <id>P87662</id>
        <label>ICP0</label>
    </interactant>
    <organismsDiffer>true</organismsDiffer>
    <experiments>3</experiments>
</comment>
<comment type="interaction">
    <interactant intactId="EBI-389564">
        <id>Q00403</id>
    </interactant>
    <interactant intactId="EBI-11702772">
        <id>P17473</id>
        <label>IE</label>
    </interactant>
    <organismsDiffer>true</organismsDiffer>
    <experiments>4</experiments>
</comment>
<comment type="interaction">
    <interactant intactId="EBI-389564">
        <id>Q00403</id>
    </interactant>
    <interactant intactId="EBI-346797">
        <id>P48281</id>
        <label>Vdr</label>
    </interactant>
    <organismsDiffer>true</organismsDiffer>
    <experiments>2</experiments>
</comment>
<comment type="subcellular location">
    <subcellularLocation>
        <location evidence="8">Nucleus</location>
    </subcellularLocation>
    <subcellularLocation>
        <location evidence="17">Chromosome</location>
    </subcellularLocation>
    <text evidence="17">Non-acetylated form colocalizes with DNA in the G0/1, S and G2 phases of the cell cycle, but not during mitosis (PubMed:24441171). Acetylated form colocalizes at transcriptionally silent mitotic chromatids during mitosis at metaphase, anaphase, and telophase phases of the cell cycle (PubMed:24441171).</text>
</comment>
<comment type="tissue specificity">
    <text evidence="17">Expressed in the inner cell mass forming the embryoblast (PubMed:24441171). Not detected in cells from the outer thin layer trophoblast (at protein level) (PubMed:24441171).</text>
</comment>
<comment type="domain">
    <text evidence="26 29 30 31">The TFIIB-type zinc-binding domain is necessary for the interaction and recruitment of RNA polymerase II to the core promoter, the formation of a fully competent pre-initiation complex (PIC) assembly and basal transcription initiation (PubMed:8413225, PubMed:8515820, PubMed:8516311, PubMed:8516312). The C-terminus is necessary and sufficient for interaction with the TATA box-bound TBP complex and for the formation of PIC (PubMed:8413225, PubMed:8515820, PubMed:8516311).</text>
</comment>
<comment type="PTM">
    <text evidence="8 17">Acetylated (PubMed:24441171). Autoacetylated; autoacetylation at Lys-238 stimulates transcription activation (PubMed:12931194).</text>
</comment>
<comment type="similarity">
    <text evidence="39">Belongs to the TFIIB family.</text>
</comment>
<name>TF2B_HUMAN</name>
<gene>
    <name type="primary">GTF2B</name>
    <name type="synonym">TF2B</name>
    <name type="synonym">TFIIB</name>
</gene>
<reference key="1">
    <citation type="journal article" date="1991" name="Nature">
        <title>Cloning of a human gene encoding the general transcription initiation factor IIB.</title>
        <authorList>
            <person name="Ha I."/>
            <person name="Lane W.S."/>
            <person name="Reinberg D."/>
        </authorList>
    </citation>
    <scope>NUCLEOTIDE SEQUENCE [MRNA]</scope>
    <scope>FUNCTION</scope>
    <scope>ASSOCIATION WITH THE TFIID-TFIIA COMPLEX</scope>
</reference>
<reference key="2">
    <citation type="journal article" date="1991" name="Proc. Natl. Acad. Sci. U.S.A.">
        <title>Sequence of general transcription factor TFIIB and relationships to other initiation factors.</title>
        <authorList>
            <person name="Malik S."/>
            <person name="Hisatake K."/>
            <person name="Sumimoto H."/>
            <person name="Horikoshi M."/>
            <person name="Roeder R.G."/>
        </authorList>
    </citation>
    <scope>NUCLEOTIDE SEQUENCE [MRNA]</scope>
    <scope>FUNCTION</scope>
</reference>
<reference key="3">
    <citation type="journal article" date="2004" name="Nat. Genet.">
        <title>Complete sequencing and characterization of 21,243 full-length human cDNAs.</title>
        <authorList>
            <person name="Ota T."/>
            <person name="Suzuki Y."/>
            <person name="Nishikawa T."/>
            <person name="Otsuki T."/>
            <person name="Sugiyama T."/>
            <person name="Irie R."/>
            <person name="Wakamatsu A."/>
            <person name="Hayashi K."/>
            <person name="Sato H."/>
            <person name="Nagai K."/>
            <person name="Kimura K."/>
            <person name="Makita H."/>
            <person name="Sekine M."/>
            <person name="Obayashi M."/>
            <person name="Nishi T."/>
            <person name="Shibahara T."/>
            <person name="Tanaka T."/>
            <person name="Ishii S."/>
            <person name="Yamamoto J."/>
            <person name="Saito K."/>
            <person name="Kawai Y."/>
            <person name="Isono Y."/>
            <person name="Nakamura Y."/>
            <person name="Nagahari K."/>
            <person name="Murakami K."/>
            <person name="Yasuda T."/>
            <person name="Iwayanagi T."/>
            <person name="Wagatsuma M."/>
            <person name="Shiratori A."/>
            <person name="Sudo H."/>
            <person name="Hosoiri T."/>
            <person name="Kaku Y."/>
            <person name="Kodaira H."/>
            <person name="Kondo H."/>
            <person name="Sugawara M."/>
            <person name="Takahashi M."/>
            <person name="Kanda K."/>
            <person name="Yokoi T."/>
            <person name="Furuya T."/>
            <person name="Kikkawa E."/>
            <person name="Omura Y."/>
            <person name="Abe K."/>
            <person name="Kamihara K."/>
            <person name="Katsuta N."/>
            <person name="Sato K."/>
            <person name="Tanikawa M."/>
            <person name="Yamazaki M."/>
            <person name="Ninomiya K."/>
            <person name="Ishibashi T."/>
            <person name="Yamashita H."/>
            <person name="Murakawa K."/>
            <person name="Fujimori K."/>
            <person name="Tanai H."/>
            <person name="Kimata M."/>
            <person name="Watanabe M."/>
            <person name="Hiraoka S."/>
            <person name="Chiba Y."/>
            <person name="Ishida S."/>
            <person name="Ono Y."/>
            <person name="Takiguchi S."/>
            <person name="Watanabe S."/>
            <person name="Yosida M."/>
            <person name="Hotuta T."/>
            <person name="Kusano J."/>
            <person name="Kanehori K."/>
            <person name="Takahashi-Fujii A."/>
            <person name="Hara H."/>
            <person name="Tanase T.-O."/>
            <person name="Nomura Y."/>
            <person name="Togiya S."/>
            <person name="Komai F."/>
            <person name="Hara R."/>
            <person name="Takeuchi K."/>
            <person name="Arita M."/>
            <person name="Imose N."/>
            <person name="Musashino K."/>
            <person name="Yuuki H."/>
            <person name="Oshima A."/>
            <person name="Sasaki N."/>
            <person name="Aotsuka S."/>
            <person name="Yoshikawa Y."/>
            <person name="Matsunawa H."/>
            <person name="Ichihara T."/>
            <person name="Shiohata N."/>
            <person name="Sano S."/>
            <person name="Moriya S."/>
            <person name="Momiyama H."/>
            <person name="Satoh N."/>
            <person name="Takami S."/>
            <person name="Terashima Y."/>
            <person name="Suzuki O."/>
            <person name="Nakagawa S."/>
            <person name="Senoh A."/>
            <person name="Mizoguchi H."/>
            <person name="Goto Y."/>
            <person name="Shimizu F."/>
            <person name="Wakebe H."/>
            <person name="Hishigaki H."/>
            <person name="Watanabe T."/>
            <person name="Sugiyama A."/>
            <person name="Takemoto M."/>
            <person name="Kawakami B."/>
            <person name="Yamazaki M."/>
            <person name="Watanabe K."/>
            <person name="Kumagai A."/>
            <person name="Itakura S."/>
            <person name="Fukuzumi Y."/>
            <person name="Fujimori Y."/>
            <person name="Komiyama M."/>
            <person name="Tashiro H."/>
            <person name="Tanigami A."/>
            <person name="Fujiwara T."/>
            <person name="Ono T."/>
            <person name="Yamada K."/>
            <person name="Fujii Y."/>
            <person name="Ozaki K."/>
            <person name="Hirao M."/>
            <person name="Ohmori Y."/>
            <person name="Kawabata A."/>
            <person name="Hikiji T."/>
            <person name="Kobatake N."/>
            <person name="Inagaki H."/>
            <person name="Ikema Y."/>
            <person name="Okamoto S."/>
            <person name="Okitani R."/>
            <person name="Kawakami T."/>
            <person name="Noguchi S."/>
            <person name="Itoh T."/>
            <person name="Shigeta K."/>
            <person name="Senba T."/>
            <person name="Matsumura K."/>
            <person name="Nakajima Y."/>
            <person name="Mizuno T."/>
            <person name="Morinaga M."/>
            <person name="Sasaki M."/>
            <person name="Togashi T."/>
            <person name="Oyama M."/>
            <person name="Hata H."/>
            <person name="Watanabe M."/>
            <person name="Komatsu T."/>
            <person name="Mizushima-Sugano J."/>
            <person name="Satoh T."/>
            <person name="Shirai Y."/>
            <person name="Takahashi Y."/>
            <person name="Nakagawa K."/>
            <person name="Okumura K."/>
            <person name="Nagase T."/>
            <person name="Nomura N."/>
            <person name="Kikuchi H."/>
            <person name="Masuho Y."/>
            <person name="Yamashita R."/>
            <person name="Nakai K."/>
            <person name="Yada T."/>
            <person name="Nakamura Y."/>
            <person name="Ohara O."/>
            <person name="Isogai T."/>
            <person name="Sugano S."/>
        </authorList>
    </citation>
    <scope>NUCLEOTIDE SEQUENCE [LARGE SCALE MRNA]</scope>
    <source>
        <tissue>Brain</tissue>
    </source>
</reference>
<reference key="4">
    <citation type="journal article" date="2008" name="Nat. Methods">
        <title>Human protein factory for converting the transcriptome into an in vitro-expressed proteome.</title>
        <authorList>
            <person name="Goshima N."/>
            <person name="Kawamura Y."/>
            <person name="Fukumoto A."/>
            <person name="Miura A."/>
            <person name="Honma R."/>
            <person name="Satoh R."/>
            <person name="Wakamatsu A."/>
            <person name="Yamamoto J."/>
            <person name="Kimura K."/>
            <person name="Nishikawa T."/>
            <person name="Andoh T."/>
            <person name="Iida Y."/>
            <person name="Ishikawa K."/>
            <person name="Ito E."/>
            <person name="Kagawa N."/>
            <person name="Kaminaga C."/>
            <person name="Kanehori K."/>
            <person name="Kawakami B."/>
            <person name="Kenmochi K."/>
            <person name="Kimura R."/>
            <person name="Kobayashi M."/>
            <person name="Kuroita T."/>
            <person name="Kuwayama H."/>
            <person name="Maruyama Y."/>
            <person name="Matsuo K."/>
            <person name="Minami K."/>
            <person name="Mitsubori M."/>
            <person name="Mori M."/>
            <person name="Morishita R."/>
            <person name="Murase A."/>
            <person name="Nishikawa A."/>
            <person name="Nishikawa S."/>
            <person name="Okamoto T."/>
            <person name="Sakagami N."/>
            <person name="Sakamoto Y."/>
            <person name="Sasaki Y."/>
            <person name="Seki T."/>
            <person name="Sono S."/>
            <person name="Sugiyama A."/>
            <person name="Sumiya T."/>
            <person name="Takayama T."/>
            <person name="Takayama Y."/>
            <person name="Takeda H."/>
            <person name="Togashi T."/>
            <person name="Yahata K."/>
            <person name="Yamada H."/>
            <person name="Yanagisawa Y."/>
            <person name="Endo Y."/>
            <person name="Imamoto F."/>
            <person name="Kisu Y."/>
            <person name="Tanaka S."/>
            <person name="Isogai T."/>
            <person name="Imai J."/>
            <person name="Watanabe S."/>
            <person name="Nomura N."/>
        </authorList>
    </citation>
    <scope>NUCLEOTIDE SEQUENCE [LARGE SCALE MRNA]</scope>
</reference>
<reference key="5">
    <citation type="journal article" date="2006" name="Nature">
        <title>The DNA sequence and biological annotation of human chromosome 1.</title>
        <authorList>
            <person name="Gregory S.G."/>
            <person name="Barlow K.F."/>
            <person name="McLay K.E."/>
            <person name="Kaul R."/>
            <person name="Swarbreck D."/>
            <person name="Dunham A."/>
            <person name="Scott C.E."/>
            <person name="Howe K.L."/>
            <person name="Woodfine K."/>
            <person name="Spencer C.C.A."/>
            <person name="Jones M.C."/>
            <person name="Gillson C."/>
            <person name="Searle S."/>
            <person name="Zhou Y."/>
            <person name="Kokocinski F."/>
            <person name="McDonald L."/>
            <person name="Evans R."/>
            <person name="Phillips K."/>
            <person name="Atkinson A."/>
            <person name="Cooper R."/>
            <person name="Jones C."/>
            <person name="Hall R.E."/>
            <person name="Andrews T.D."/>
            <person name="Lloyd C."/>
            <person name="Ainscough R."/>
            <person name="Almeida J.P."/>
            <person name="Ambrose K.D."/>
            <person name="Anderson F."/>
            <person name="Andrew R.W."/>
            <person name="Ashwell R.I.S."/>
            <person name="Aubin K."/>
            <person name="Babbage A.K."/>
            <person name="Bagguley C.L."/>
            <person name="Bailey J."/>
            <person name="Beasley H."/>
            <person name="Bethel G."/>
            <person name="Bird C.P."/>
            <person name="Bray-Allen S."/>
            <person name="Brown J.Y."/>
            <person name="Brown A.J."/>
            <person name="Buckley D."/>
            <person name="Burton J."/>
            <person name="Bye J."/>
            <person name="Carder C."/>
            <person name="Chapman J.C."/>
            <person name="Clark S.Y."/>
            <person name="Clarke G."/>
            <person name="Clee C."/>
            <person name="Cobley V."/>
            <person name="Collier R.E."/>
            <person name="Corby N."/>
            <person name="Coville G.J."/>
            <person name="Davies J."/>
            <person name="Deadman R."/>
            <person name="Dunn M."/>
            <person name="Earthrowl M."/>
            <person name="Ellington A.G."/>
            <person name="Errington H."/>
            <person name="Frankish A."/>
            <person name="Frankland J."/>
            <person name="French L."/>
            <person name="Garner P."/>
            <person name="Garnett J."/>
            <person name="Gay L."/>
            <person name="Ghori M.R.J."/>
            <person name="Gibson R."/>
            <person name="Gilby L.M."/>
            <person name="Gillett W."/>
            <person name="Glithero R.J."/>
            <person name="Grafham D.V."/>
            <person name="Griffiths C."/>
            <person name="Griffiths-Jones S."/>
            <person name="Grocock R."/>
            <person name="Hammond S."/>
            <person name="Harrison E.S.I."/>
            <person name="Hart E."/>
            <person name="Haugen E."/>
            <person name="Heath P.D."/>
            <person name="Holmes S."/>
            <person name="Holt K."/>
            <person name="Howden P.J."/>
            <person name="Hunt A.R."/>
            <person name="Hunt S.E."/>
            <person name="Hunter G."/>
            <person name="Isherwood J."/>
            <person name="James R."/>
            <person name="Johnson C."/>
            <person name="Johnson D."/>
            <person name="Joy A."/>
            <person name="Kay M."/>
            <person name="Kershaw J.K."/>
            <person name="Kibukawa M."/>
            <person name="Kimberley A.M."/>
            <person name="King A."/>
            <person name="Knights A.J."/>
            <person name="Lad H."/>
            <person name="Laird G."/>
            <person name="Lawlor S."/>
            <person name="Leongamornlert D.A."/>
            <person name="Lloyd D.M."/>
            <person name="Loveland J."/>
            <person name="Lovell J."/>
            <person name="Lush M.J."/>
            <person name="Lyne R."/>
            <person name="Martin S."/>
            <person name="Mashreghi-Mohammadi M."/>
            <person name="Matthews L."/>
            <person name="Matthews N.S.W."/>
            <person name="McLaren S."/>
            <person name="Milne S."/>
            <person name="Mistry S."/>
            <person name="Moore M.J.F."/>
            <person name="Nickerson T."/>
            <person name="O'Dell C.N."/>
            <person name="Oliver K."/>
            <person name="Palmeiri A."/>
            <person name="Palmer S.A."/>
            <person name="Parker A."/>
            <person name="Patel D."/>
            <person name="Pearce A.V."/>
            <person name="Peck A.I."/>
            <person name="Pelan S."/>
            <person name="Phelps K."/>
            <person name="Phillimore B.J."/>
            <person name="Plumb R."/>
            <person name="Rajan J."/>
            <person name="Raymond C."/>
            <person name="Rouse G."/>
            <person name="Saenphimmachak C."/>
            <person name="Sehra H.K."/>
            <person name="Sheridan E."/>
            <person name="Shownkeen R."/>
            <person name="Sims S."/>
            <person name="Skuce C.D."/>
            <person name="Smith M."/>
            <person name="Steward C."/>
            <person name="Subramanian S."/>
            <person name="Sycamore N."/>
            <person name="Tracey A."/>
            <person name="Tromans A."/>
            <person name="Van Helmond Z."/>
            <person name="Wall M."/>
            <person name="Wallis J.M."/>
            <person name="White S."/>
            <person name="Whitehead S.L."/>
            <person name="Wilkinson J.E."/>
            <person name="Willey D.L."/>
            <person name="Williams H."/>
            <person name="Wilming L."/>
            <person name="Wray P.W."/>
            <person name="Wu Z."/>
            <person name="Coulson A."/>
            <person name="Vaudin M."/>
            <person name="Sulston J.E."/>
            <person name="Durbin R.M."/>
            <person name="Hubbard T."/>
            <person name="Wooster R."/>
            <person name="Dunham I."/>
            <person name="Carter N.P."/>
            <person name="McVean G."/>
            <person name="Ross M.T."/>
            <person name="Harrow J."/>
            <person name="Olson M.V."/>
            <person name="Beck S."/>
            <person name="Rogers J."/>
            <person name="Bentley D.R."/>
        </authorList>
    </citation>
    <scope>NUCLEOTIDE SEQUENCE [LARGE SCALE GENOMIC DNA]</scope>
</reference>
<reference key="6">
    <citation type="journal article" date="2004" name="Genome Res.">
        <title>The status, quality, and expansion of the NIH full-length cDNA project: the Mammalian Gene Collection (MGC).</title>
        <authorList>
            <consortium name="The MGC Project Team"/>
        </authorList>
    </citation>
    <scope>NUCLEOTIDE SEQUENCE [LARGE SCALE MRNA]</scope>
    <source>
        <tissue>Prostate</tissue>
    </source>
</reference>
<reference key="7">
    <citation type="journal article" date="1992" name="J. Biol. Chem.">
        <title>Members of the steroid hormone receptor superfamily interact with TFIIB (S300-II).</title>
        <authorList>
            <person name="Ing N.H."/>
            <person name="Beekman J.M."/>
            <person name="Tsai S.Y."/>
            <person name="Tsai M.J."/>
            <person name="O'Malley B.W."/>
        </authorList>
    </citation>
    <scope>NUCLEOTIDE SEQUENCE [MRNA] OF 6-316</scope>
    <scope>FUNCTION</scope>
    <scope>INTERACTION WITH ESR1; NR2F1 AND PGR</scope>
</reference>
<reference key="8">
    <citation type="journal article" date="1987" name="J. Biol. Chem.">
        <title>Factors involved in specific transcription in mammalian RNA polymerase II. Functional analysis of initiation factors IIA and IID and identification of a new factor operating at sequences downstream of the initiation site.</title>
        <authorList>
            <person name="Reinberg D."/>
            <person name="Horikoshi M."/>
            <person name="Roeder R.G."/>
        </authorList>
    </citation>
    <scope>FUNCTION</scope>
    <scope>IDENTIFICATION IN A RNA POLYMERASE II INITIATION COMPLEX</scope>
</reference>
<reference key="9">
    <citation type="journal article" date="1987" name="J. Biol. Chem.">
        <title>Factors involved in specific transcription by mammalian RNA polymerase II. Purification and functional analysis of initiation factors IIB and IIE.</title>
        <authorList>
            <person name="Reinberg D."/>
            <person name="Roeder R.G."/>
        </authorList>
    </citation>
    <scope>FUNCTION</scope>
    <scope>IDENTIFICATION IN A RNA POLYMERASE II INITIATION COMPLEX</scope>
</reference>
<reference key="10">
    <citation type="journal article" date="1990" name="Mol. Cell. Biol.">
        <title>Factors involved in specific transcription by mammalian RNA polymerase II: role of transcription factors IIA, IID, and IIB during formation of a transcription-competent complex.</title>
        <authorList>
            <person name="Maldonado E."/>
            <person name="Ha I."/>
            <person name="Cortes P."/>
            <person name="Weis L."/>
            <person name="Reinberg D."/>
        </authorList>
    </citation>
    <scope>ASSOCIATION WITH THE TFIID-TFIIA COMPLEX</scope>
</reference>
<reference key="11">
    <citation type="journal article" date="1993" name="Genes Dev.">
        <title>Multiple functional domains of human transcription factor IIB: distinct interactions with two general transcription factors and RNA polymerase II.</title>
        <authorList>
            <person name="Ha I."/>
            <person name="Roberts S."/>
            <person name="Maldonado E."/>
            <person name="Sun X."/>
            <person name="Kim L.U."/>
            <person name="Green M."/>
            <person name="Reinberg D."/>
        </authorList>
    </citation>
    <scope>FUNCTION</scope>
    <scope>INTERACTION WITH GTF2F2; RNA POLYMERASE II AND TBP</scope>
    <scope>MUTAGENESIS OF ARG-286; ARG-290 AND ARG-295</scope>
</reference>
<reference key="12">
    <citation type="journal article" date="1993" name="J. Virol.">
        <title>ICP4, the major transcriptional regulatory protein of herpes simplex virus type 1, forms a tripartite complex with TATA-binding protein and TFIIB.</title>
        <authorList>
            <person name="Smith C.A."/>
            <person name="Bates P."/>
            <person name="Rivera-Gonzalez R."/>
            <person name="Gu B."/>
            <person name="DeLuca N.A."/>
        </authorList>
    </citation>
    <scope>INTERACTION WITH HERPES SIMPLEX VIRUS 1 ICP4 (MICROBIAL INFECTION)</scope>
</reference>
<reference key="13">
    <citation type="journal article" date="1993" name="Mol. Cell. Biol.">
        <title>Potential RNA polymerase II-induced interactions of transcription factor TFIIB.</title>
        <authorList>
            <person name="Malik S."/>
            <person name="Lee D.K."/>
            <person name="Roeder R.G."/>
        </authorList>
    </citation>
    <scope>FUNCTION</scope>
    <scope>IDENTIFICATION IN A RNA POLYMERASE II INITIATION COMPLEX</scope>
    <scope>INTERACTION WITH RNA POLYMERASE II</scope>
    <scope>DOMAIN</scope>
</reference>
<reference key="14">
    <citation type="journal article" date="1993" name="Nature">
        <title>Interaction between an acidic activator and transcription factor TFIIB is required for transcriptional activation.</title>
        <authorList>
            <person name="Roberts S.G."/>
            <person name="Ha I."/>
            <person name="Maldonado E."/>
            <person name="Reinberg D."/>
            <person name="Green M.R."/>
        </authorList>
    </citation>
    <scope>INTERACTION WITH HERPES VIRUS ACTIVATOR PROTEIN VP16 (MICROBIAL INFECTION)</scope>
    <scope>MUTAGENESIS OF ARG-185; LYS-189; ARG-193; LYS-196 AND LYS-200</scope>
</reference>
<reference key="15">
    <citation type="journal article" date="1993" name="Nature">
        <title>Functional dissection of TFIIB domains required for TFIIB-TFIID-promoter complex formation and basal transcription activity.</title>
        <authorList>
            <person name="Hisatake K."/>
            <person name="Roeder R.G."/>
            <person name="Horikoshi M."/>
        </authorList>
    </citation>
    <scope>FUNCTION</scope>
    <scope>IDENTIFICATION IN A COMPLEX WITH TATA BOX-BOUND TBP</scope>
    <scope>DOMAINS</scope>
</reference>
<reference key="16">
    <citation type="journal article" date="1993" name="Proc. Natl. Acad. Sci. U.S.A.">
        <title>Delineation of two functional regions of transcription factor TFIIB.</title>
        <authorList>
            <person name="Barberis A."/>
            <person name="Mueller C.W."/>
            <person name="Harrison S.C."/>
            <person name="Ptashne M."/>
        </authorList>
    </citation>
    <scope>FUNCTION</scope>
    <scope>IDENTIFICATION IN A COMPLEX WITH TATA BOX-BOUND TBP</scope>
    <scope>DOMAINS</scope>
</reference>
<reference key="17">
    <citation type="journal article" date="1993" name="Proc. Natl. Acad. Sci. U.S.A.">
        <title>Functional domains of transcription factor TFIIB.</title>
        <authorList>
            <person name="Buratowski S."/>
            <person name="Zhou H."/>
        </authorList>
    </citation>
    <scope>FUNCTION</scope>
    <scope>IDENTIFICATION IN A RNA POLYMERASE II INITIATION COMPLEX</scope>
    <scope>DOMAIN</scope>
    <scope>MUTAGENESIS OF CYS-37 AND GLY-247</scope>
</reference>
<reference key="18">
    <citation type="journal article" date="1995" name="Gene">
        <title>Isolation and characterization of a cDNA encoding a new type of human transcription elongation factor S-II.</title>
        <authorList>
            <person name="Umehara T."/>
            <person name="Kida S."/>
            <person name="Yamamoto T."/>
            <person name="Horikoshi M."/>
        </authorList>
    </citation>
    <scope>INTERACTION WITH TCEA2</scope>
</reference>
<reference key="19">
    <citation type="journal article" date="1995" name="Genes Dev.">
        <title>Recycling of the general transcription factors during RNA polymerase II transcription.</title>
        <authorList>
            <person name="Zawel L."/>
            <person name="Kumar K.P."/>
            <person name="Reinberg D."/>
        </authorList>
    </citation>
    <scope>FUNCTION</scope>
    <scope>IDENTIFICATION IN A RNA POLYMERASE II INITIATION COMPLEX</scope>
</reference>
<reference key="20">
    <citation type="journal article" date="1995" name="J. Virol.">
        <title>The Epstein-Barr virus nuclear protein 2 acidic domain can interact with TFIIB, TAF40, and RPA70 but not with TATA-binding protein.</title>
        <authorList>
            <person name="Tong X."/>
            <person name="Wang F."/>
            <person name="Thut C.J."/>
            <person name="Kieff E."/>
        </authorList>
    </citation>
    <scope>INTERACTION WITH EBV EBNA2 (MICROBIAL INFECTION)</scope>
</reference>
<reference key="21">
    <citation type="journal article" date="1996" name="J. Biol. Chem.">
        <title>RNA polymerase II-associated protein (RAP) 74 binds transcription factor (TF) IIB and blocks TFIIB-RAP30 binding.</title>
        <authorList>
            <person name="Fang S.M."/>
            <person name="Burton Z.F."/>
        </authorList>
    </citation>
    <scope>INTERACTION WITH GTF2F1 AND GTF2F2</scope>
    <scope>REGION</scope>
</reference>
<reference key="22">
    <citation type="journal article" date="1996" name="J. Mol. Biol.">
        <title>The human immunodeficiency virus type 1 Vpr transactivator: cooperation with promoter-bound activator domains and binding to TFIIB.</title>
        <authorList>
            <person name="Agostini I."/>
            <person name="Navarro J.-M."/>
            <person name="Rey F."/>
            <person name="Bouhamdan M."/>
            <person name="Spire B."/>
            <person name="Vigne R."/>
            <person name="Sire J."/>
        </authorList>
    </citation>
    <scope>INTERACTION WITH HIV-1 VPR (MICROBIAL INFECTION)</scope>
</reference>
<reference key="23">
    <citation type="journal article" date="1998" name="Genes Dev.">
        <title>New core promoter element in RNA polymerase II-dependent transcription: sequence-specific DNA binding by transcription factor IIB.</title>
        <authorList>
            <person name="Lagrange T."/>
            <person name="Kapanidis A.N."/>
            <person name="Tang H."/>
            <person name="Reinberg D."/>
            <person name="Ebright R.H."/>
        </authorList>
    </citation>
    <scope>FUNCTION</scope>
    <scope>DNA-BINDING</scope>
    <scope>MUTAGENESIS OF VAL-283 AND ARG-286</scope>
</reference>
<reference key="24">
    <citation type="journal article" date="1999" name="FEBS Lett.">
        <title>The HIV-1 Vpr co-activator induces a conformational change in TFIIB.</title>
        <authorList>
            <person name="Agostini I."/>
            <person name="Navarro J.M."/>
            <person name="Bouhamdan M."/>
            <person name="Willetts K."/>
            <person name="Rey F."/>
            <person name="Spire B."/>
            <person name="Vigne R."/>
            <person name="Pomerantz R."/>
            <person name="Sire J."/>
        </authorList>
    </citation>
    <scope>MUTAGENESIS OF 52-GLU--SER-56</scope>
</reference>
<reference key="25">
    <citation type="journal article" date="1999" name="J. Biol. Chem.">
        <title>The role of human TFIIB in transcription start site selection in vitro and in vivo.</title>
        <authorList>
            <person name="Hawkes N.A."/>
            <person name="Roberts S.G."/>
        </authorList>
    </citation>
    <scope>FUNCTION</scope>
    <scope>MUTAGENESIS OF GLU-51 AND ARG-66</scope>
</reference>
<reference key="26">
    <citation type="journal article" date="2000" name="Cell Stress Chaperones">
        <title>Potential targets for HSF1 within the preinitiation complex.</title>
        <authorList>
            <person name="Yuan C.X."/>
            <person name="Gurley W.B."/>
        </authorList>
    </citation>
    <scope>INTERACTION WITH HSF1</scope>
</reference>
<reference key="27">
    <citation type="journal article" date="2003" name="Nature">
        <title>Transcription factor IIB acetylates itself to regulate transcription.</title>
        <authorList>
            <person name="Choi C.H."/>
            <person name="Hiromura M."/>
            <person name="Usheva A."/>
        </authorList>
    </citation>
    <scope>FUNCTION</scope>
    <scope>ACETYLATION AT LYS-238</scope>
    <scope>AUTOACETYLATION</scope>
    <scope>CATALYTIC ACTIVITY</scope>
    <scope>BIOPHYSICOCHEMICAL PROPERTIES</scope>
    <scope>INTERACTION WITH GTF2F1</scope>
    <scope>SUBCELLULAR LOCATION</scope>
    <scope>MUTAGENESIS OF LYS-238</scope>
    <scope>CHROMATIN-BINDING</scope>
    <scope>IDENTIFICATION BY MASS SPECTROMETRY</scope>
</reference>
<reference key="28">
    <citation type="journal article" date="2005" name="Genes Dev.">
        <title>A core promoter element downstream of the TATA box that is recognized by TFIIB.</title>
        <authorList>
            <person name="Deng W."/>
            <person name="Roberts S.G."/>
        </authorList>
    </citation>
    <scope>FUNCTION</scope>
    <scope>MUTAGENESIS OF GLY-153</scope>
</reference>
<reference key="29">
    <citation type="journal article" date="2008" name="Proc. Natl. Acad. Sci. U.S.A.">
        <title>A quantitative atlas of mitotic phosphorylation.</title>
        <authorList>
            <person name="Dephoure N."/>
            <person name="Zhou C."/>
            <person name="Villen J."/>
            <person name="Beausoleil S.A."/>
            <person name="Bakalarski C.E."/>
            <person name="Elledge S.J."/>
            <person name="Gygi S.P."/>
        </authorList>
    </citation>
    <scope>PHOSPHORYLATION [LARGE SCALE ANALYSIS] AT SER-76</scope>
    <scope>IDENTIFICATION BY MASS SPECTROMETRY [LARGE SCALE ANALYSIS]</scope>
    <source>
        <tissue>Cervix carcinoma</tissue>
    </source>
</reference>
<reference key="30">
    <citation type="journal article" date="2009" name="Sci. Signal.">
        <title>Quantitative phosphoproteomic analysis of T cell receptor signaling reveals system-wide modulation of protein-protein interactions.</title>
        <authorList>
            <person name="Mayya V."/>
            <person name="Lundgren D.H."/>
            <person name="Hwang S.-I."/>
            <person name="Rezaul K."/>
            <person name="Wu L."/>
            <person name="Eng J.K."/>
            <person name="Rodionov V."/>
            <person name="Han D.K."/>
        </authorList>
    </citation>
    <scope>PHOSPHORYLATION [LARGE SCALE ANALYSIS] AT SER-76</scope>
    <scope>IDENTIFICATION BY MASS SPECTROMETRY [LARGE SCALE ANALYSIS]</scope>
    <source>
        <tissue>Leukemic T-cell</tissue>
    </source>
</reference>
<reference key="31">
    <citation type="journal article" date="2011" name="BMC Syst. Biol.">
        <title>Initial characterization of the human central proteome.</title>
        <authorList>
            <person name="Burkard T.R."/>
            <person name="Planyavsky M."/>
            <person name="Kaupe I."/>
            <person name="Breitwieser F.P."/>
            <person name="Buerckstuemmer T."/>
            <person name="Bennett K.L."/>
            <person name="Superti-Furga G."/>
            <person name="Colinge J."/>
        </authorList>
    </citation>
    <scope>IDENTIFICATION BY MASS SPECTROMETRY [LARGE SCALE ANALYSIS]</scope>
</reference>
<reference key="32">
    <citation type="journal article" date="2013" name="J. Proteome Res.">
        <title>Toward a comprehensive characterization of a human cancer cell phosphoproteome.</title>
        <authorList>
            <person name="Zhou H."/>
            <person name="Di Palma S."/>
            <person name="Preisinger C."/>
            <person name="Peng M."/>
            <person name="Polat A.N."/>
            <person name="Heck A.J."/>
            <person name="Mohammed S."/>
        </authorList>
    </citation>
    <scope>PHOSPHORYLATION [LARGE SCALE ANALYSIS] AT SER-70; SER-76 AND SER-92</scope>
    <scope>IDENTIFICATION BY MASS SPECTROMETRY [LARGE SCALE ANALYSIS]</scope>
    <source>
        <tissue>Cervix carcinoma</tissue>
        <tissue>Erythroleukemia</tissue>
    </source>
</reference>
<reference key="33">
    <citation type="journal article" date="2014" name="Sci. Rep.">
        <title>A new paradigm for transcription factor TFIIB functionality.</title>
        <authorList>
            <person name="Gelev V."/>
            <person name="Zabolotny J.M."/>
            <person name="Lange M."/>
            <person name="Hiromura M."/>
            <person name="Yoo S.W."/>
            <person name="Orlando J.S."/>
            <person name="Kushnir A."/>
            <person name="Horikoshi N."/>
            <person name="Paquet E."/>
            <person name="Bachvarov D."/>
            <person name="Schaffer P.A."/>
            <person name="Usheva A."/>
        </authorList>
    </citation>
    <scope>FUNCTION</scope>
    <scope>FUNCTION IN HSV-1 TRANSCRIPTION AND REPLICATION (MICROBIAL INFECTION)</scope>
    <scope>SUBCELLULAR LOCATION</scope>
    <scope>CHROMATIN-BINDING</scope>
    <scope>ACETYLATION</scope>
    <scope>TISSUE SPECIFICITY</scope>
</reference>
<reference key="34">
    <citation type="journal article" date="1995" name="Cell">
        <title>Solution structure of the C-terminal core domain of human TFIIB: similarity to cyclin A and interaction with TATA-binding protein.</title>
        <authorList>
            <person name="Bagby S."/>
            <person name="Kim S."/>
            <person name="Maldonado E."/>
            <person name="Tong K.I."/>
            <person name="Reinberg D."/>
            <person name="Ikura M."/>
        </authorList>
    </citation>
    <scope>STRUCTURE BY NMR OF 111-316</scope>
</reference>
<reference evidence="45" key="35">
    <citation type="journal article" date="1995" name="Nature">
        <title>Crystal structure of a TFIIB-TBP-TATA-element ternary complex.</title>
        <authorList>
            <person name="Nikolov D.B."/>
            <person name="Chen H."/>
            <person name="Halay E.D."/>
            <person name="Usheva A.A."/>
            <person name="Hisatake K."/>
            <person name="Lee D.K."/>
            <person name="Roeder R.G."/>
            <person name="Burley S.K."/>
        </authorList>
    </citation>
    <scope>X-RAY CRYSTALLOGRAPHY (2.7 ANGSTROMS) OF 113-316 IN COMPLEX WITH PLANT TATA BOX-BINDING PROTEIN AND DNA</scope>
    <scope>DNA-BINDING</scope>
</reference>
<reference evidence="44" key="36">
    <citation type="journal article" date="1998" name="Biochemistry">
        <title>Human general transcription factor TFIIB: conformational variability and interaction with VP16 activation domain.</title>
        <authorList>
            <person name="Hayashi F."/>
            <person name="Ishima R."/>
            <person name="Liu D."/>
            <person name="Tong K.I."/>
            <person name="Kim S."/>
            <person name="Reinberg D."/>
            <person name="Bagby S."/>
            <person name="Ikura M."/>
        </authorList>
    </citation>
    <scope>STRUCTURE BY NMR OF 112-316</scope>
</reference>
<reference evidence="40" key="37">
    <citation type="journal article" date="2000" name="EMBO J.">
        <title>Structural basis of preinitiation complex assembly on human pol II promoters.</title>
        <authorList>
            <person name="Tsai F.T.F."/>
            <person name="Sigler P.B."/>
        </authorList>
    </citation>
    <scope>X-RAY CRYSTALLOGRAPHY (2.65 ANGSTROMS) OF 110-316 IN COMPLEX WITH TBP AND DNA</scope>
    <scope>INTERACTION WITH TBP</scope>
    <scope>DNA-BINDING</scope>
</reference>
<reference evidence="41" key="38">
    <citation type="journal article" date="2000" name="Protein Sci.">
        <title>Structure of a (Cys3His) zinc ribbon, a ubiquitous motif in archaeal and eucaryal transcription.</title>
        <authorList>
            <person name="Chen H.T."/>
            <person name="Legault P."/>
            <person name="Glushka J."/>
            <person name="Omichinski J.G."/>
            <person name="Scott R.A."/>
        </authorList>
    </citation>
    <scope>STRUCTURE BY NMR OF 2-59 IN COMPLEX WITH ZINC</scope>
</reference>
<reference evidence="42 43" key="39">
    <citation type="journal article" date="2004" name="Biochem. J.">
        <title>Probing Zn2+-binding effects on the zinc-ribbon domain of human general transcription factor TFIIB.</title>
        <authorList>
            <person name="Ghosh M."/>
            <person name="Elsby L.M."/>
            <person name="Mal T.K."/>
            <person name="Gooding J.M."/>
            <person name="Roberts S.G."/>
            <person name="Ikura M."/>
        </authorList>
    </citation>
    <scope>STRUCTURE BY NMR OF 1-60 IN APO AND -BOUND FORMS IN COMPLEX WITH ZINC</scope>
</reference>
<reference evidence="46" key="40">
    <citation type="journal article" date="2005" name="Biochemistry">
        <title>Structural properties of the promiscuous VP16 activation domain.</title>
        <authorList>
            <person name="Jonker H.R."/>
            <person name="Wechselberger R.W."/>
            <person name="Boelens R."/>
            <person name="Folkers G.E."/>
            <person name="Kaptein R."/>
        </authorList>
    </citation>
    <scope>STRUCTURE BY NMR OF 111-316 IN COMPLEX WITH HERPES VIRUS ACTIVATOR PROTEIN VP16</scope>
    <scope>INTERACTION WITH VP16 (MICROBIAL INFECTION)</scope>
</reference>
<reference evidence="47 48 49 50 51 52 53 54" key="41">
    <citation type="journal article" date="2016" name="Nature">
        <title>Near-atomic resolution visualization of human transcription promoter opening.</title>
        <authorList>
            <person name="He Y."/>
            <person name="Yan C."/>
            <person name="Fang J."/>
            <person name="Inouye C."/>
            <person name="Tjian R."/>
            <person name="Ivanov I."/>
            <person name="Nogales E."/>
        </authorList>
    </citation>
    <scope>STRUCTURE BY ELECTRON MICROSCOPY (3.90 ANGSTROMS) OF TRANSCRIPTION PRE-INITIATION COMPLEX IN COMPLEX WITH PROMOTER DNA AND ZN(2+)</scope>
    <scope>IDENTIFICATION IN A COMPLEX WITH TBP-BASED PIC</scope>
    <scope>FUNCTION</scope>
    <scope>SUBUNIT</scope>
</reference>
<reference evidence="55" key="42">
    <citation type="journal article" date="2018" name="J. Biol. Chem.">
        <title>Structural dissection of an interaction between transcription initiation and termination factors implicated in promoter-terminator cross-talk.</title>
        <authorList>
            <person name="Bratkowski M."/>
            <person name="Unarta I.C."/>
            <person name="Zhu L."/>
            <person name="Shubbar M."/>
            <person name="Huang X."/>
            <person name="Liu X."/>
        </authorList>
    </citation>
    <scope>X-RAY CRYSTALLOGRAPHY (3.39 ANGSTROMS) OF 107-316 OF APOPROTEIN</scope>
    <scope>IDENTIFICATION IN A COMPLEX WITH TATA BOX-BOUND TBP</scope>
    <scope>INTERACTION WITH SSU72</scope>
    <scope>MUTAGENESIS OF ARG-185; LYS-189; ARG-193; 200-LYS--LEU-208; LYS-200 AND LEU-208</scope>
</reference>
<reference key="43">
    <citation type="journal article" date="2006" name="Science">
        <title>The consensus coding sequences of human breast and colorectal cancers.</title>
        <authorList>
            <person name="Sjoeblom T."/>
            <person name="Jones S."/>
            <person name="Wood L.D."/>
            <person name="Parsons D.W."/>
            <person name="Lin J."/>
            <person name="Barber T.D."/>
            <person name="Mandelker D."/>
            <person name="Leary R.J."/>
            <person name="Ptak J."/>
            <person name="Silliman N."/>
            <person name="Szabo S."/>
            <person name="Buckhaults P."/>
            <person name="Farrell C."/>
            <person name="Meeh P."/>
            <person name="Markowitz S.D."/>
            <person name="Willis J."/>
            <person name="Dawson D."/>
            <person name="Willson J.K.V."/>
            <person name="Gazdar A.F."/>
            <person name="Hartigan J."/>
            <person name="Wu L."/>
            <person name="Liu C."/>
            <person name="Parmigiani G."/>
            <person name="Park B.H."/>
            <person name="Bachman K.E."/>
            <person name="Papadopoulos N."/>
            <person name="Vogelstein B."/>
            <person name="Kinzler K.W."/>
            <person name="Velculescu V.E."/>
        </authorList>
    </citation>
    <scope>VARIANT [LARGE SCALE ANALYSIS] GLN-132</scope>
</reference>
<dbReference type="EC" id="2.3.1.48" evidence="8"/>
<dbReference type="EMBL" id="X59268">
    <property type="protein sequence ID" value="CAA41958.1"/>
    <property type="molecule type" value="mRNA"/>
</dbReference>
<dbReference type="EMBL" id="M76766">
    <property type="protein sequence ID" value="AAA61149.1"/>
    <property type="molecule type" value="mRNA"/>
</dbReference>
<dbReference type="EMBL" id="AK289822">
    <property type="protein sequence ID" value="BAF82511.1"/>
    <property type="molecule type" value="mRNA"/>
</dbReference>
<dbReference type="EMBL" id="AB451296">
    <property type="protein sequence ID" value="BAG70110.1"/>
    <property type="molecule type" value="mRNA"/>
</dbReference>
<dbReference type="EMBL" id="AL445991">
    <property type="status" value="NOT_ANNOTATED_CDS"/>
    <property type="molecule type" value="Genomic_DNA"/>
</dbReference>
<dbReference type="EMBL" id="BC020597">
    <property type="protein sequence ID" value="AAH20597.1"/>
    <property type="molecule type" value="mRNA"/>
</dbReference>
<dbReference type="EMBL" id="S44184">
    <property type="protein sequence ID" value="AAB23144.1"/>
    <property type="molecule type" value="mRNA"/>
</dbReference>
<dbReference type="CCDS" id="CCDS715.1"/>
<dbReference type="PIR" id="S17654">
    <property type="entry name" value="TWHU2B"/>
</dbReference>
<dbReference type="RefSeq" id="NP_001505.1">
    <property type="nucleotide sequence ID" value="NM_001514.6"/>
</dbReference>
<dbReference type="PDB" id="1C9B">
    <property type="method" value="X-ray"/>
    <property type="resolution" value="2.65 A"/>
    <property type="chains" value="A/E/I/M/Q=110-316"/>
</dbReference>
<dbReference type="PDB" id="1DL6">
    <property type="method" value="NMR"/>
    <property type="chains" value="A=2-59"/>
</dbReference>
<dbReference type="PDB" id="1RLY">
    <property type="method" value="NMR"/>
    <property type="chains" value="A=1-60"/>
</dbReference>
<dbReference type="PDB" id="1RO4">
    <property type="method" value="NMR"/>
    <property type="chains" value="A=1-60"/>
</dbReference>
<dbReference type="PDB" id="1TFB">
    <property type="method" value="NMR"/>
    <property type="chains" value="A=112-316"/>
</dbReference>
<dbReference type="PDB" id="1VOL">
    <property type="method" value="X-ray"/>
    <property type="resolution" value="2.70 A"/>
    <property type="chains" value="A=113-316"/>
</dbReference>
<dbReference type="PDB" id="2PHG">
    <property type="method" value="NMR"/>
    <property type="chains" value="A=112-316"/>
</dbReference>
<dbReference type="PDB" id="5IY6">
    <property type="method" value="EM"/>
    <property type="resolution" value="7.20 A"/>
    <property type="chains" value="M=1-316"/>
</dbReference>
<dbReference type="PDB" id="5IY7">
    <property type="method" value="EM"/>
    <property type="resolution" value="8.60 A"/>
    <property type="chains" value="M=1-316"/>
</dbReference>
<dbReference type="PDB" id="5IY8">
    <property type="method" value="EM"/>
    <property type="resolution" value="7.90 A"/>
    <property type="chains" value="M=1-316"/>
</dbReference>
<dbReference type="PDB" id="5IY9">
    <property type="method" value="EM"/>
    <property type="resolution" value="6.30 A"/>
    <property type="chains" value="M=1-316"/>
</dbReference>
<dbReference type="PDB" id="5IYA">
    <property type="method" value="EM"/>
    <property type="resolution" value="5.40 A"/>
    <property type="chains" value="M=1-316"/>
</dbReference>
<dbReference type="PDB" id="5IYB">
    <property type="method" value="EM"/>
    <property type="resolution" value="3.90 A"/>
    <property type="chains" value="M=1-316"/>
</dbReference>
<dbReference type="PDB" id="5IYC">
    <property type="method" value="EM"/>
    <property type="resolution" value="3.90 A"/>
    <property type="chains" value="M=1-316"/>
</dbReference>
<dbReference type="PDB" id="5IYD">
    <property type="method" value="EM"/>
    <property type="resolution" value="3.90 A"/>
    <property type="chains" value="M=1-316"/>
</dbReference>
<dbReference type="PDB" id="5WH1">
    <property type="method" value="X-ray"/>
    <property type="resolution" value="3.39 A"/>
    <property type="chains" value="A/B/C/D=107-316"/>
</dbReference>
<dbReference type="PDB" id="6O9L">
    <property type="method" value="EM"/>
    <property type="resolution" value="7.20 A"/>
    <property type="chains" value="M=1-316"/>
</dbReference>
<dbReference type="PDB" id="7EDX">
    <property type="method" value="EM"/>
    <property type="resolution" value="4.50 A"/>
    <property type="chains" value="R=1-316"/>
</dbReference>
<dbReference type="PDB" id="7EG7">
    <property type="method" value="EM"/>
    <property type="resolution" value="6.20 A"/>
    <property type="chains" value="R=1-316"/>
</dbReference>
<dbReference type="PDB" id="7EG8">
    <property type="method" value="EM"/>
    <property type="resolution" value="7.40 A"/>
    <property type="chains" value="R=1-316"/>
</dbReference>
<dbReference type="PDB" id="7EG9">
    <property type="method" value="EM"/>
    <property type="resolution" value="3.70 A"/>
    <property type="chains" value="R=1-316"/>
</dbReference>
<dbReference type="PDB" id="7EGA">
    <property type="method" value="EM"/>
    <property type="resolution" value="4.10 A"/>
    <property type="chains" value="R=1-316"/>
</dbReference>
<dbReference type="PDB" id="7EGB">
    <property type="method" value="EM"/>
    <property type="resolution" value="3.30 A"/>
    <property type="chains" value="R=1-316"/>
</dbReference>
<dbReference type="PDB" id="7EGC">
    <property type="method" value="EM"/>
    <property type="resolution" value="3.90 A"/>
    <property type="chains" value="R=1-316"/>
</dbReference>
<dbReference type="PDB" id="7ENA">
    <property type="method" value="EM"/>
    <property type="resolution" value="4.07 A"/>
    <property type="chains" value="BA=1-316"/>
</dbReference>
<dbReference type="PDB" id="7ENC">
    <property type="method" value="EM"/>
    <property type="resolution" value="4.13 A"/>
    <property type="chains" value="BA=1-316"/>
</dbReference>
<dbReference type="PDB" id="7LBM">
    <property type="method" value="EM"/>
    <property type="resolution" value="4.80 A"/>
    <property type="chains" value="O=1-316"/>
</dbReference>
<dbReference type="PDB" id="7NVR">
    <property type="method" value="EM"/>
    <property type="resolution" value="4.50 A"/>
    <property type="chains" value="M=1-316"/>
</dbReference>
<dbReference type="PDB" id="7NVS">
    <property type="method" value="EM"/>
    <property type="resolution" value="2.80 A"/>
    <property type="chains" value="M=1-316"/>
</dbReference>
<dbReference type="PDB" id="7NVT">
    <property type="method" value="EM"/>
    <property type="resolution" value="2.90 A"/>
    <property type="chains" value="M=1-316"/>
</dbReference>
<dbReference type="PDB" id="7NVU">
    <property type="method" value="EM"/>
    <property type="resolution" value="2.50 A"/>
    <property type="chains" value="M=1-316"/>
</dbReference>
<dbReference type="PDB" id="7NVY">
    <property type="method" value="EM"/>
    <property type="resolution" value="7.30 A"/>
    <property type="chains" value="M=1-316"/>
</dbReference>
<dbReference type="PDB" id="7NVZ">
    <property type="method" value="EM"/>
    <property type="resolution" value="7.20 A"/>
    <property type="chains" value="M=1-316"/>
</dbReference>
<dbReference type="PDB" id="7NW0">
    <property type="method" value="EM"/>
    <property type="resolution" value="6.60 A"/>
    <property type="chains" value="M=1-316"/>
</dbReference>
<dbReference type="PDB" id="7ZWC">
    <property type="method" value="EM"/>
    <property type="resolution" value="3.20 A"/>
    <property type="chains" value="M=1-316"/>
</dbReference>
<dbReference type="PDB" id="7ZWD">
    <property type="method" value="EM"/>
    <property type="resolution" value="3.00 A"/>
    <property type="chains" value="M=1-316"/>
</dbReference>
<dbReference type="PDB" id="7ZX7">
    <property type="method" value="EM"/>
    <property type="resolution" value="3.40 A"/>
    <property type="chains" value="M=1-316"/>
</dbReference>
<dbReference type="PDB" id="7ZX8">
    <property type="method" value="EM"/>
    <property type="resolution" value="3.00 A"/>
    <property type="chains" value="M=1-316"/>
</dbReference>
<dbReference type="PDB" id="7ZXE">
    <property type="method" value="EM"/>
    <property type="resolution" value="3.50 A"/>
    <property type="chains" value="M=1-316"/>
</dbReference>
<dbReference type="PDB" id="8BVW">
    <property type="method" value="EM"/>
    <property type="resolution" value="4.00 A"/>
    <property type="chains" value="M=1-316"/>
</dbReference>
<dbReference type="PDB" id="8BYQ">
    <property type="method" value="EM"/>
    <property type="resolution" value="4.10 A"/>
    <property type="chains" value="M=1-316"/>
</dbReference>
<dbReference type="PDB" id="8BZ1">
    <property type="method" value="EM"/>
    <property type="resolution" value="3.80 A"/>
    <property type="chains" value="M=1-316"/>
</dbReference>
<dbReference type="PDB" id="8GXQ">
    <property type="method" value="EM"/>
    <property type="resolution" value="5.04 A"/>
    <property type="chains" value="BA=1-316"/>
</dbReference>
<dbReference type="PDB" id="8GXS">
    <property type="method" value="EM"/>
    <property type="resolution" value="4.16 A"/>
    <property type="chains" value="BA=1-316"/>
</dbReference>
<dbReference type="PDB" id="8S51">
    <property type="method" value="EM"/>
    <property type="resolution" value="3.10 A"/>
    <property type="chains" value="M=1-316"/>
</dbReference>
<dbReference type="PDB" id="8S52">
    <property type="method" value="EM"/>
    <property type="resolution" value="2.90 A"/>
    <property type="chains" value="M=1-316"/>
</dbReference>
<dbReference type="PDB" id="8S5N">
    <property type="method" value="EM"/>
    <property type="resolution" value="3.40 A"/>
    <property type="chains" value="M=1-316"/>
</dbReference>
<dbReference type="PDB" id="8WAK">
    <property type="method" value="EM"/>
    <property type="resolution" value="5.47 A"/>
    <property type="chains" value="R=1-316"/>
</dbReference>
<dbReference type="PDB" id="8WAL">
    <property type="method" value="EM"/>
    <property type="resolution" value="8.52 A"/>
    <property type="chains" value="R=1-316"/>
</dbReference>
<dbReference type="PDB" id="8WAN">
    <property type="method" value="EM"/>
    <property type="resolution" value="6.07 A"/>
    <property type="chains" value="R=1-316"/>
</dbReference>
<dbReference type="PDB" id="8WAO">
    <property type="method" value="EM"/>
    <property type="resolution" value="6.40 A"/>
    <property type="chains" value="R=1-316"/>
</dbReference>
<dbReference type="PDB" id="8WAP">
    <property type="method" value="EM"/>
    <property type="resolution" value="5.85 A"/>
    <property type="chains" value="R=1-316"/>
</dbReference>
<dbReference type="PDB" id="8WAQ">
    <property type="method" value="EM"/>
    <property type="resolution" value="6.29 A"/>
    <property type="chains" value="R=1-316"/>
</dbReference>
<dbReference type="PDB" id="8WAR">
    <property type="method" value="EM"/>
    <property type="resolution" value="7.20 A"/>
    <property type="chains" value="R=1-316"/>
</dbReference>
<dbReference type="PDB" id="8WAS">
    <property type="method" value="EM"/>
    <property type="resolution" value="6.13 A"/>
    <property type="chains" value="R=1-316"/>
</dbReference>
<dbReference type="PDBsum" id="1C9B"/>
<dbReference type="PDBsum" id="1DL6"/>
<dbReference type="PDBsum" id="1RLY"/>
<dbReference type="PDBsum" id="1RO4"/>
<dbReference type="PDBsum" id="1TFB"/>
<dbReference type="PDBsum" id="1VOL"/>
<dbReference type="PDBsum" id="2PHG"/>
<dbReference type="PDBsum" id="5IY6"/>
<dbReference type="PDBsum" id="5IY7"/>
<dbReference type="PDBsum" id="5IY8"/>
<dbReference type="PDBsum" id="5IY9"/>
<dbReference type="PDBsum" id="5IYA"/>
<dbReference type="PDBsum" id="5IYB"/>
<dbReference type="PDBsum" id="5IYC"/>
<dbReference type="PDBsum" id="5IYD"/>
<dbReference type="PDBsum" id="5WH1"/>
<dbReference type="PDBsum" id="6O9L"/>
<dbReference type="PDBsum" id="7EDX"/>
<dbReference type="PDBsum" id="7EG7"/>
<dbReference type="PDBsum" id="7EG8"/>
<dbReference type="PDBsum" id="7EG9"/>
<dbReference type="PDBsum" id="7EGA"/>
<dbReference type="PDBsum" id="7EGB"/>
<dbReference type="PDBsum" id="7EGC"/>
<dbReference type="PDBsum" id="7ENA"/>
<dbReference type="PDBsum" id="7ENC"/>
<dbReference type="PDBsum" id="7LBM"/>
<dbReference type="PDBsum" id="7NVR"/>
<dbReference type="PDBsum" id="7NVS"/>
<dbReference type="PDBsum" id="7NVT"/>
<dbReference type="PDBsum" id="7NVU"/>
<dbReference type="PDBsum" id="7NVY"/>
<dbReference type="PDBsum" id="7NVZ"/>
<dbReference type="PDBsum" id="7NW0"/>
<dbReference type="PDBsum" id="7ZWC"/>
<dbReference type="PDBsum" id="7ZWD"/>
<dbReference type="PDBsum" id="7ZX7"/>
<dbReference type="PDBsum" id="7ZX8"/>
<dbReference type="PDBsum" id="7ZXE"/>
<dbReference type="PDBsum" id="8BVW"/>
<dbReference type="PDBsum" id="8BYQ"/>
<dbReference type="PDBsum" id="8BZ1"/>
<dbReference type="PDBsum" id="8GXQ"/>
<dbReference type="PDBsum" id="8GXS"/>
<dbReference type="PDBsum" id="8S51"/>
<dbReference type="PDBsum" id="8S52"/>
<dbReference type="PDBsum" id="8S5N"/>
<dbReference type="PDBsum" id="8WAK"/>
<dbReference type="PDBsum" id="8WAL"/>
<dbReference type="PDBsum" id="8WAN"/>
<dbReference type="PDBsum" id="8WAO"/>
<dbReference type="PDBsum" id="8WAP"/>
<dbReference type="PDBsum" id="8WAQ"/>
<dbReference type="PDBsum" id="8WAR"/>
<dbReference type="PDBsum" id="8WAS"/>
<dbReference type="EMDB" id="EMD-12610"/>
<dbReference type="EMDB" id="EMD-12611"/>
<dbReference type="EMDB" id="EMD-12612"/>
<dbReference type="EMDB" id="EMD-12613"/>
<dbReference type="EMDB" id="EMD-12617"/>
<dbReference type="EMDB" id="EMD-12618"/>
<dbReference type="EMDB" id="EMD-12619"/>
<dbReference type="EMDB" id="EMD-14996"/>
<dbReference type="EMDB" id="EMD-14997"/>
<dbReference type="EMDB" id="EMD-15006"/>
<dbReference type="EMDB" id="EMD-15007"/>
<dbReference type="EMDB" id="EMD-15009"/>
<dbReference type="EMDB" id="EMD-16274"/>
<dbReference type="EMDB" id="EMD-16331"/>
<dbReference type="EMDB" id="EMD-16335"/>
<dbReference type="EMDB" id="EMD-19718"/>
<dbReference type="EMDB" id="EMD-19719"/>
<dbReference type="EMDB" id="EMD-19743"/>
<dbReference type="EMDB" id="EMD-23255"/>
<dbReference type="EMDB" id="EMD-31075"/>
<dbReference type="EMDB" id="EMD-31107"/>
<dbReference type="EMDB" id="EMD-31108"/>
<dbReference type="EMDB" id="EMD-31109"/>
<dbReference type="EMDB" id="EMD-31110"/>
<dbReference type="EMDB" id="EMD-31111"/>
<dbReference type="EMDB" id="EMD-31112"/>
<dbReference type="EMDB" id="EMD-31204"/>
<dbReference type="EMDB" id="EMD-31207"/>
<dbReference type="EMDB" id="EMD-34359"/>
<dbReference type="EMDB" id="EMD-34360"/>
<dbReference type="EMDB" id="EMD-37395"/>
<dbReference type="EMDB" id="EMD-37396"/>
<dbReference type="EMDB" id="EMD-37398"/>
<dbReference type="EMDB" id="EMD-37399"/>
<dbReference type="EMDB" id="EMD-37400"/>
<dbReference type="EMDB" id="EMD-37401"/>
<dbReference type="EMDB" id="EMD-37402"/>
<dbReference type="EMDB" id="EMD-37403"/>
<dbReference type="EMDB" id="EMD-8132"/>
<dbReference type="EMDB" id="EMD-8133"/>
<dbReference type="EMDB" id="EMD-8134"/>
<dbReference type="EMDB" id="EMD-8135"/>
<dbReference type="EMDB" id="EMD-8136"/>
<dbReference type="EMDB" id="EMD-8137"/>
<dbReference type="EMDB" id="EMD-8138"/>
<dbReference type="SMR" id="Q00403"/>
<dbReference type="BioGRID" id="109214">
    <property type="interactions" value="143"/>
</dbReference>
<dbReference type="ComplexPortal" id="CPX-2398">
    <property type="entry name" value="General transcription factor TFIIB-TBP complex"/>
</dbReference>
<dbReference type="CORUM" id="Q00403"/>
<dbReference type="DIP" id="DIP-1077N"/>
<dbReference type="FunCoup" id="Q00403">
    <property type="interactions" value="2408"/>
</dbReference>
<dbReference type="IntAct" id="Q00403">
    <property type="interactions" value="121"/>
</dbReference>
<dbReference type="MINT" id="Q00403"/>
<dbReference type="STRING" id="9606.ENSP00000359531"/>
<dbReference type="GlyGen" id="Q00403">
    <property type="glycosylation" value="1 site, 1 O-linked glycan (1 site)"/>
</dbReference>
<dbReference type="iPTMnet" id="Q00403"/>
<dbReference type="MetOSite" id="Q00403"/>
<dbReference type="PhosphoSitePlus" id="Q00403"/>
<dbReference type="BioMuta" id="GTF2B"/>
<dbReference type="DMDM" id="135629"/>
<dbReference type="jPOST" id="Q00403"/>
<dbReference type="MassIVE" id="Q00403"/>
<dbReference type="PaxDb" id="9606-ENSP00000359531"/>
<dbReference type="PeptideAtlas" id="Q00403"/>
<dbReference type="ProteomicsDB" id="57846"/>
<dbReference type="Pumba" id="Q00403"/>
<dbReference type="Antibodypedia" id="19819">
    <property type="antibodies" value="475 antibodies from 37 providers"/>
</dbReference>
<dbReference type="DNASU" id="2959"/>
<dbReference type="Ensembl" id="ENST00000370500.10">
    <property type="protein sequence ID" value="ENSP00000359531.5"/>
    <property type="gene ID" value="ENSG00000137947.12"/>
</dbReference>
<dbReference type="GeneID" id="2959"/>
<dbReference type="KEGG" id="hsa:2959"/>
<dbReference type="MANE-Select" id="ENST00000370500.10">
    <property type="protein sequence ID" value="ENSP00000359531.5"/>
    <property type="RefSeq nucleotide sequence ID" value="NM_001514.6"/>
    <property type="RefSeq protein sequence ID" value="NP_001505.1"/>
</dbReference>
<dbReference type="UCSC" id="uc001dmo.5">
    <property type="organism name" value="human"/>
</dbReference>
<dbReference type="AGR" id="HGNC:4648"/>
<dbReference type="CTD" id="2959"/>
<dbReference type="DisGeNET" id="2959"/>
<dbReference type="GeneCards" id="GTF2B"/>
<dbReference type="HGNC" id="HGNC:4648">
    <property type="gene designation" value="GTF2B"/>
</dbReference>
<dbReference type="HPA" id="ENSG00000137947">
    <property type="expression patterns" value="Low tissue specificity"/>
</dbReference>
<dbReference type="MIM" id="189963">
    <property type="type" value="gene"/>
</dbReference>
<dbReference type="neXtProt" id="NX_Q00403"/>
<dbReference type="OpenTargets" id="ENSG00000137947"/>
<dbReference type="PharmGKB" id="PA29035"/>
<dbReference type="VEuPathDB" id="HostDB:ENSG00000137947"/>
<dbReference type="eggNOG" id="KOG1597">
    <property type="taxonomic scope" value="Eukaryota"/>
</dbReference>
<dbReference type="GeneTree" id="ENSGT00390000006671"/>
<dbReference type="InParanoid" id="Q00403"/>
<dbReference type="OMA" id="DHDQRMK"/>
<dbReference type="OrthoDB" id="25790at2759"/>
<dbReference type="PAN-GO" id="Q00403">
    <property type="GO annotations" value="11 GO annotations based on evolutionary models"/>
</dbReference>
<dbReference type="PhylomeDB" id="Q00403"/>
<dbReference type="TreeFam" id="TF105953"/>
<dbReference type="PathwayCommons" id="Q00403"/>
<dbReference type="Reactome" id="R-HSA-167161">
    <property type="pathway name" value="HIV Transcription Initiation"/>
</dbReference>
<dbReference type="Reactome" id="R-HSA-167162">
    <property type="pathway name" value="RNA Polymerase II HIV Promoter Escape"/>
</dbReference>
<dbReference type="Reactome" id="R-HSA-167172">
    <property type="pathway name" value="Transcription of the HIV genome"/>
</dbReference>
<dbReference type="Reactome" id="R-HSA-674695">
    <property type="pathway name" value="RNA Polymerase II Pre-transcription Events"/>
</dbReference>
<dbReference type="Reactome" id="R-HSA-6807505">
    <property type="pathway name" value="RNA polymerase II transcribes snRNA genes"/>
</dbReference>
<dbReference type="Reactome" id="R-HSA-73776">
    <property type="pathway name" value="RNA Polymerase II Promoter Escape"/>
</dbReference>
<dbReference type="Reactome" id="R-HSA-73779">
    <property type="pathway name" value="RNA Polymerase II Transcription Pre-Initiation And Promoter Opening"/>
</dbReference>
<dbReference type="Reactome" id="R-HSA-75953">
    <property type="pathway name" value="RNA Polymerase II Transcription Initiation"/>
</dbReference>
<dbReference type="Reactome" id="R-HSA-76042">
    <property type="pathway name" value="RNA Polymerase II Transcription Initiation And Promoter Clearance"/>
</dbReference>
<dbReference type="SignaLink" id="Q00403"/>
<dbReference type="SIGNOR" id="Q00403"/>
<dbReference type="BioGRID-ORCS" id="2959">
    <property type="hits" value="846 hits in 1175 CRISPR screens"/>
</dbReference>
<dbReference type="CD-CODE" id="91857CE7">
    <property type="entry name" value="Nucleolus"/>
</dbReference>
<dbReference type="ChiTaRS" id="GTF2B">
    <property type="organism name" value="human"/>
</dbReference>
<dbReference type="EvolutionaryTrace" id="Q00403"/>
<dbReference type="GeneWiki" id="Transcription_factor_II_B"/>
<dbReference type="GenomeRNAi" id="2959"/>
<dbReference type="Pharos" id="Q00403">
    <property type="development level" value="Tbio"/>
</dbReference>
<dbReference type="PRO" id="PR:Q00403"/>
<dbReference type="Proteomes" id="UP000005640">
    <property type="component" value="Chromosome 1"/>
</dbReference>
<dbReference type="RNAct" id="Q00403">
    <property type="molecule type" value="protein"/>
</dbReference>
<dbReference type="Bgee" id="ENSG00000137947">
    <property type="expression patterns" value="Expressed in oocyte and 204 other cell types or tissues"/>
</dbReference>
<dbReference type="ExpressionAtlas" id="Q00403">
    <property type="expression patterns" value="baseline and differential"/>
</dbReference>
<dbReference type="GO" id="GO:0032153">
    <property type="term" value="C:cell division site"/>
    <property type="evidence" value="ECO:0007669"/>
    <property type="project" value="Ensembl"/>
</dbReference>
<dbReference type="GO" id="GO:0005694">
    <property type="term" value="C:chromosome"/>
    <property type="evidence" value="ECO:0000314"/>
    <property type="project" value="UniProtKB"/>
</dbReference>
<dbReference type="GO" id="GO:0042585">
    <property type="term" value="C:germinal vesicle"/>
    <property type="evidence" value="ECO:0007669"/>
    <property type="project" value="Ensembl"/>
</dbReference>
<dbReference type="GO" id="GO:0000776">
    <property type="term" value="C:kinetochore"/>
    <property type="evidence" value="ECO:0007669"/>
    <property type="project" value="Ensembl"/>
</dbReference>
<dbReference type="GO" id="GO:0016604">
    <property type="term" value="C:nuclear body"/>
    <property type="evidence" value="ECO:0000314"/>
    <property type="project" value="HPA"/>
</dbReference>
<dbReference type="GO" id="GO:0005654">
    <property type="term" value="C:nucleoplasm"/>
    <property type="evidence" value="ECO:0000314"/>
    <property type="project" value="HPA"/>
</dbReference>
<dbReference type="GO" id="GO:0005634">
    <property type="term" value="C:nucleus"/>
    <property type="evidence" value="ECO:0000314"/>
    <property type="project" value="UniProtKB"/>
</dbReference>
<dbReference type="GO" id="GO:0032993">
    <property type="term" value="C:protein-DNA complex"/>
    <property type="evidence" value="ECO:0000314"/>
    <property type="project" value="UniProtKB"/>
</dbReference>
<dbReference type="GO" id="GO:0090575">
    <property type="term" value="C:RNA polymerase II transcription regulator complex"/>
    <property type="evidence" value="ECO:0000314"/>
    <property type="project" value="UniProtKB"/>
</dbReference>
<dbReference type="GO" id="GO:0005669">
    <property type="term" value="C:transcription factor TFIID complex"/>
    <property type="evidence" value="ECO:0000314"/>
    <property type="project" value="UniProtKB"/>
</dbReference>
<dbReference type="GO" id="GO:0097550">
    <property type="term" value="C:transcription preinitiation complex"/>
    <property type="evidence" value="ECO:0000318"/>
    <property type="project" value="GO_Central"/>
</dbReference>
<dbReference type="GO" id="GO:0016407">
    <property type="term" value="F:acetyltransferase activity"/>
    <property type="evidence" value="ECO:0000314"/>
    <property type="project" value="UniProtKB"/>
</dbReference>
<dbReference type="GO" id="GO:0140297">
    <property type="term" value="F:DNA-binding transcription factor binding"/>
    <property type="evidence" value="ECO:0000353"/>
    <property type="project" value="UniProtKB"/>
</dbReference>
<dbReference type="GO" id="GO:0004402">
    <property type="term" value="F:histone acetyltransferase activity"/>
    <property type="evidence" value="ECO:0007669"/>
    <property type="project" value="UniProtKB-EC"/>
</dbReference>
<dbReference type="GO" id="GO:0046966">
    <property type="term" value="F:nuclear thyroid hormone receptor binding"/>
    <property type="evidence" value="ECO:0000353"/>
    <property type="project" value="UniProtKB"/>
</dbReference>
<dbReference type="GO" id="GO:1990841">
    <property type="term" value="F:promoter-specific chromatin binding"/>
    <property type="evidence" value="ECO:0000314"/>
    <property type="project" value="UniProtKB"/>
</dbReference>
<dbReference type="GO" id="GO:0000993">
    <property type="term" value="F:RNA polymerase II complex binding"/>
    <property type="evidence" value="ECO:0000314"/>
    <property type="project" value="UniProtKB"/>
</dbReference>
<dbReference type="GO" id="GO:0000979">
    <property type="term" value="F:RNA polymerase II core promoter sequence-specific DNA binding"/>
    <property type="evidence" value="ECO:0000314"/>
    <property type="project" value="UniProtKB"/>
</dbReference>
<dbReference type="GO" id="GO:0016251">
    <property type="term" value="F:RNA polymerase II general transcription initiation factor activity"/>
    <property type="evidence" value="ECO:0000314"/>
    <property type="project" value="ARUK-UCL"/>
</dbReference>
<dbReference type="GO" id="GO:0017025">
    <property type="term" value="F:TBP-class protein binding"/>
    <property type="evidence" value="ECO:0000353"/>
    <property type="project" value="CAFA"/>
</dbReference>
<dbReference type="GO" id="GO:0008270">
    <property type="term" value="F:zinc ion binding"/>
    <property type="evidence" value="ECO:0000314"/>
    <property type="project" value="UniProtKB"/>
</dbReference>
<dbReference type="GO" id="GO:0006352">
    <property type="term" value="P:DNA-templated transcription initiation"/>
    <property type="evidence" value="ECO:0000318"/>
    <property type="project" value="GO_Central"/>
</dbReference>
<dbReference type="GO" id="GO:0051177">
    <property type="term" value="P:meiotic sister chromatid cohesion"/>
    <property type="evidence" value="ECO:0007669"/>
    <property type="project" value="Ensembl"/>
</dbReference>
<dbReference type="GO" id="GO:1904798">
    <property type="term" value="P:positive regulation of core promoter binding"/>
    <property type="evidence" value="ECO:0000314"/>
    <property type="project" value="GO_Central"/>
</dbReference>
<dbReference type="GO" id="GO:0006473">
    <property type="term" value="P:protein acetylation"/>
    <property type="evidence" value="ECO:0000314"/>
    <property type="project" value="UniProtKB"/>
</dbReference>
<dbReference type="GO" id="GO:1990114">
    <property type="term" value="P:RNA polymerase II core complex assembly"/>
    <property type="evidence" value="ECO:0000315"/>
    <property type="project" value="UniProtKB"/>
</dbReference>
<dbReference type="GO" id="GO:0051123">
    <property type="term" value="P:RNA polymerase II preinitiation complex assembly"/>
    <property type="evidence" value="ECO:0000314"/>
    <property type="project" value="UniProtKB"/>
</dbReference>
<dbReference type="GO" id="GO:0051225">
    <property type="term" value="P:spindle assembly"/>
    <property type="evidence" value="ECO:0007669"/>
    <property type="project" value="Ensembl"/>
</dbReference>
<dbReference type="GO" id="GO:0006366">
    <property type="term" value="P:transcription by RNA polymerase II"/>
    <property type="evidence" value="ECO:0000314"/>
    <property type="project" value="ARUK-UCL"/>
</dbReference>
<dbReference type="GO" id="GO:0006367">
    <property type="term" value="P:transcription initiation at RNA polymerase II promoter"/>
    <property type="evidence" value="ECO:0000314"/>
    <property type="project" value="UniProtKB"/>
</dbReference>
<dbReference type="GO" id="GO:0001174">
    <property type="term" value="P:transcriptional start site selection at RNA polymerase II promoter"/>
    <property type="evidence" value="ECO:0000315"/>
    <property type="project" value="UniProtKB"/>
</dbReference>
<dbReference type="GO" id="GO:0019083">
    <property type="term" value="P:viral transcription"/>
    <property type="evidence" value="ECO:0000314"/>
    <property type="project" value="GO_Central"/>
</dbReference>
<dbReference type="CDD" id="cd20551">
    <property type="entry name" value="CYCLIN_TFIIB_rpt1"/>
    <property type="match status" value="1"/>
</dbReference>
<dbReference type="CDD" id="cd20552">
    <property type="entry name" value="CYCLIN_TFIIB_rpt2"/>
    <property type="match status" value="1"/>
</dbReference>
<dbReference type="FunFam" id="1.10.472.10:FF:000008">
    <property type="entry name" value="Transcription initiation factor IIB"/>
    <property type="match status" value="1"/>
</dbReference>
<dbReference type="FunFam" id="1.10.472.170:FF:000003">
    <property type="entry name" value="Transcription initiation factor IIB"/>
    <property type="match status" value="1"/>
</dbReference>
<dbReference type="FunFam" id="2.20.25.10:FF:000007">
    <property type="entry name" value="Transcription initiation factor IIB"/>
    <property type="match status" value="1"/>
</dbReference>
<dbReference type="FunFam" id="1.10.472.10:FF:000019">
    <property type="entry name" value="transcription initiation factor IIB"/>
    <property type="match status" value="1"/>
</dbReference>
<dbReference type="Gene3D" id="2.20.25.10">
    <property type="match status" value="1"/>
</dbReference>
<dbReference type="Gene3D" id="1.10.472.10">
    <property type="entry name" value="Cyclin-like"/>
    <property type="match status" value="2"/>
</dbReference>
<dbReference type="IDEAL" id="IID00314"/>
<dbReference type="InterPro" id="IPR013763">
    <property type="entry name" value="Cyclin-like_dom"/>
</dbReference>
<dbReference type="InterPro" id="IPR036915">
    <property type="entry name" value="Cyclin-like_sf"/>
</dbReference>
<dbReference type="InterPro" id="IPR000812">
    <property type="entry name" value="TFIIB"/>
</dbReference>
<dbReference type="InterPro" id="IPR023486">
    <property type="entry name" value="TFIIB_CS"/>
</dbReference>
<dbReference type="InterPro" id="IPR013150">
    <property type="entry name" value="TFIIB_cyclin"/>
</dbReference>
<dbReference type="InterPro" id="IPR013137">
    <property type="entry name" value="Znf_TFIIB"/>
</dbReference>
<dbReference type="PANTHER" id="PTHR11618:SF77">
    <property type="entry name" value="TRANSCRIPTION INITIATION FACTOR IIB"/>
    <property type="match status" value="1"/>
</dbReference>
<dbReference type="PANTHER" id="PTHR11618">
    <property type="entry name" value="TRANSCRIPTION INITIATION FACTOR IIB-RELATED"/>
    <property type="match status" value="1"/>
</dbReference>
<dbReference type="Pfam" id="PF00382">
    <property type="entry name" value="TFIIB"/>
    <property type="match status" value="2"/>
</dbReference>
<dbReference type="Pfam" id="PF08271">
    <property type="entry name" value="Zn_Ribbon_TF"/>
    <property type="match status" value="1"/>
</dbReference>
<dbReference type="PRINTS" id="PR00685">
    <property type="entry name" value="TIFACTORIIB"/>
</dbReference>
<dbReference type="SMART" id="SM00385">
    <property type="entry name" value="CYCLIN"/>
    <property type="match status" value="2"/>
</dbReference>
<dbReference type="SUPFAM" id="SSF47954">
    <property type="entry name" value="Cyclin-like"/>
    <property type="match status" value="2"/>
</dbReference>
<dbReference type="SUPFAM" id="SSF57783">
    <property type="entry name" value="Zinc beta-ribbon"/>
    <property type="match status" value="1"/>
</dbReference>
<dbReference type="PROSITE" id="PS00782">
    <property type="entry name" value="TFIIB"/>
    <property type="match status" value="2"/>
</dbReference>
<dbReference type="PROSITE" id="PS51134">
    <property type="entry name" value="ZF_TFIIB"/>
    <property type="match status" value="1"/>
</dbReference>
<proteinExistence type="evidence at protein level"/>
<evidence type="ECO:0000250" key="1">
    <source>
        <dbReference type="UniProtKB" id="P62915"/>
    </source>
</evidence>
<evidence type="ECO:0000255" key="2">
    <source>
        <dbReference type="PROSITE-ProRule" id="PRU00469"/>
    </source>
</evidence>
<evidence type="ECO:0000269" key="3">
    <source>
    </source>
</evidence>
<evidence type="ECO:0000269" key="4">
    <source>
    </source>
</evidence>
<evidence type="ECO:0000269" key="5">
    <source>
    </source>
</evidence>
<evidence type="ECO:0000269" key="6">
    <source>
    </source>
</evidence>
<evidence type="ECO:0000269" key="7">
    <source>
    </source>
</evidence>
<evidence type="ECO:0000269" key="8">
    <source>
    </source>
</evidence>
<evidence type="ECO:0000269" key="9">
    <source>
    </source>
</evidence>
<evidence type="ECO:0000269" key="10">
    <source>
    </source>
</evidence>
<evidence type="ECO:0000269" key="11">
    <source>
    </source>
</evidence>
<evidence type="ECO:0000269" key="12">
    <source>
    </source>
</evidence>
<evidence type="ECO:0000269" key="13">
    <source>
    </source>
</evidence>
<evidence type="ECO:0000269" key="14">
    <source>
    </source>
</evidence>
<evidence type="ECO:0000269" key="15">
    <source>
    </source>
</evidence>
<evidence type="ECO:0000269" key="16">
    <source>
    </source>
</evidence>
<evidence type="ECO:0000269" key="17">
    <source>
    </source>
</evidence>
<evidence type="ECO:0000269" key="18">
    <source>
    </source>
</evidence>
<evidence type="ECO:0000269" key="19">
    <source>
    </source>
</evidence>
<evidence type="ECO:0000269" key="20">
    <source>
    </source>
</evidence>
<evidence type="ECO:0000269" key="21">
    <source>
    </source>
</evidence>
<evidence type="ECO:0000269" key="22">
    <source>
    </source>
</evidence>
<evidence type="ECO:0000269" key="23">
    <source>
    </source>
</evidence>
<evidence type="ECO:0000269" key="24">
    <source>
    </source>
</evidence>
<evidence type="ECO:0000269" key="25">
    <source>
    </source>
</evidence>
<evidence type="ECO:0000269" key="26">
    <source>
    </source>
</evidence>
<evidence type="ECO:0000269" key="27">
    <source>
    </source>
</evidence>
<evidence type="ECO:0000269" key="28">
    <source>
    </source>
</evidence>
<evidence type="ECO:0000269" key="29">
    <source>
    </source>
</evidence>
<evidence type="ECO:0000269" key="30">
    <source>
    </source>
</evidence>
<evidence type="ECO:0000269" key="31">
    <source>
    </source>
</evidence>
<evidence type="ECO:0000269" key="32">
    <source>
    </source>
</evidence>
<evidence type="ECO:0000269" key="33">
    <source>
    </source>
</evidence>
<evidence type="ECO:0000269" key="34">
    <source>
    </source>
</evidence>
<evidence type="ECO:0000269" key="35">
    <source>
    </source>
</evidence>
<evidence type="ECO:0000303" key="36">
    <source>
    </source>
</evidence>
<evidence type="ECO:0000303" key="37">
    <source>
    </source>
</evidence>
<evidence type="ECO:0000303" key="38">
    <source>
    </source>
</evidence>
<evidence type="ECO:0000305" key="39"/>
<evidence type="ECO:0007744" key="40">
    <source>
        <dbReference type="PDB" id="1C9B"/>
    </source>
</evidence>
<evidence type="ECO:0007744" key="41">
    <source>
        <dbReference type="PDB" id="1DL6"/>
    </source>
</evidence>
<evidence type="ECO:0007744" key="42">
    <source>
        <dbReference type="PDB" id="1RLY"/>
    </source>
</evidence>
<evidence type="ECO:0007744" key="43">
    <source>
        <dbReference type="PDB" id="1RO4"/>
    </source>
</evidence>
<evidence type="ECO:0007744" key="44">
    <source>
        <dbReference type="PDB" id="1TFB"/>
    </source>
</evidence>
<evidence type="ECO:0007744" key="45">
    <source>
        <dbReference type="PDB" id="1VOL"/>
    </source>
</evidence>
<evidence type="ECO:0007744" key="46">
    <source>
        <dbReference type="PDB" id="2PHG"/>
    </source>
</evidence>
<evidence type="ECO:0007744" key="47">
    <source>
        <dbReference type="PDB" id="5IY6"/>
    </source>
</evidence>
<evidence type="ECO:0007744" key="48">
    <source>
        <dbReference type="PDB" id="5IY7"/>
    </source>
</evidence>
<evidence type="ECO:0007744" key="49">
    <source>
        <dbReference type="PDB" id="5IY8"/>
    </source>
</evidence>
<evidence type="ECO:0007744" key="50">
    <source>
        <dbReference type="PDB" id="5IY9"/>
    </source>
</evidence>
<evidence type="ECO:0007744" key="51">
    <source>
        <dbReference type="PDB" id="5IYA"/>
    </source>
</evidence>
<evidence type="ECO:0007744" key="52">
    <source>
        <dbReference type="PDB" id="5IYB"/>
    </source>
</evidence>
<evidence type="ECO:0007744" key="53">
    <source>
        <dbReference type="PDB" id="5IYC"/>
    </source>
</evidence>
<evidence type="ECO:0007744" key="54">
    <source>
        <dbReference type="PDB" id="5IYD"/>
    </source>
</evidence>
<evidence type="ECO:0007744" key="55">
    <source>
        <dbReference type="PDB" id="5WH1"/>
    </source>
</evidence>
<evidence type="ECO:0007744" key="56">
    <source>
    </source>
</evidence>
<evidence type="ECO:0007744" key="57">
    <source>
    </source>
</evidence>
<evidence type="ECO:0007744" key="58">
    <source>
    </source>
</evidence>
<evidence type="ECO:0007829" key="59">
    <source>
        <dbReference type="PDB" id="1C9B"/>
    </source>
</evidence>
<evidence type="ECO:0007829" key="60">
    <source>
        <dbReference type="PDB" id="1RLY"/>
    </source>
</evidence>
<evidence type="ECO:0007829" key="61">
    <source>
        <dbReference type="PDB" id="7NVS"/>
    </source>
</evidence>
<evidence type="ECO:0007829" key="62">
    <source>
        <dbReference type="PDB" id="7NVU"/>
    </source>
</evidence>
<evidence type="ECO:0007829" key="63">
    <source>
        <dbReference type="PDB" id="8S52"/>
    </source>
</evidence>
<keyword id="KW-0002">3D-structure</keyword>
<keyword id="KW-0007">Acetylation</keyword>
<keyword id="KW-0012">Acyltransferase</keyword>
<keyword id="KW-0158">Chromosome</keyword>
<keyword id="KW-0238">DNA-binding</keyword>
<keyword id="KW-0945">Host-virus interaction</keyword>
<keyword id="KW-0479">Metal-binding</keyword>
<keyword id="KW-0539">Nucleus</keyword>
<keyword id="KW-0597">Phosphoprotein</keyword>
<keyword id="KW-1267">Proteomics identification</keyword>
<keyword id="KW-1185">Reference proteome</keyword>
<keyword id="KW-0677">Repeat</keyword>
<keyword id="KW-0804">Transcription</keyword>
<keyword id="KW-0805">Transcription regulation</keyword>
<keyword id="KW-0808">Transferase</keyword>
<keyword id="KW-0862">Zinc</keyword>
<keyword id="KW-0863">Zinc-finger</keyword>
<accession>Q00403</accession>
<accession>A8K1A7</accession>
<accession>Q5JS30</accession>